<sequence length="3423" mass="379109">MKNPKKKSGGFRIVNMLKRGVARVSPFGGLKRLPAGLLLGHGPIRMVLAILAFLRFTAIKPSLGLINRWGSVGKKEAMEIIKKFKKDLAAMLRIINARKEKKRRGTDTSVGIVGLLLTTAMAVEVTRRGNAYYMYLDRSDAGEAISFPTTMGMNKCYIQIMDLGHMCDATMSYECPMLDEGVEPDDVDCWCNTTSTWVVYGTCHHKKGEARRSRRAVTLPSHSTRKLQTRSQTWLESREYTKHLIRVENWIFRNPGFALAAAAIAWLLGSSTSQKVIYLVMILLIAPAYSIRCIGVSNRDFVEGMSGGTWVDVVLEHGGCVTVMAQDKPTVDIELVTTTVSNMAEVRSYCYEASISDMASDSRCPTQGEAYLDKQSDTQYVCKRTLVDRGWGNGCGLFGKGSLVTCAKFACSKKMTGKSIQPENLEYRIMLSVHGSQHSGMIVNDTGHETDENRAKVEITPNSPRAEATLGGFGSLGLDCEPRTGLDFSDLYYLTMNNKHWLVHKEWFHDIPLPWHAGADTGTPHWNNKEALVEFKDAHAKRQTVVVLGSQEGAVHTALAGALEAEMDGAKGRLSSGHLKCRLKMDKLRLKGVSYSLCTAAFTFTKIPAETLHGTVTVEVQYAGTDGPCKVPAQMAVDMQTLTPVGRLITANPVITESTENSKMMLELDPPFGDSYIVIGVGEKKITHHWHRSGSTIGKAFEATVRGAKRMAVLGDTAWDFGSVGGALNSLGKGIHQIFGAAFKSLFGGMSWFSQILIGTLLVWLGLNTKNGSISLMCLALGGVLIFLSTAVSADVGCSVDFSKKETRCGTGVFVYNDVEAWRDRYKYHPDSPRRLAAAVKQAWEDGICGISSVSRMENIMWRSVEGELNAILEENGVQLTVVVGSVKNPMWRGPQRLPVPVNELPHGWKAWGKSYFVRAAKTNNSFVVDGDTLKECPLKHRAWNSFLVEDHGFGVFHTSVWLKVREDYSLECDPAVIGTAAKGKEAVHSDLGYWIESEKNDTWRLKRAHLIEMKTCEWPKSHTLWTDGIEESDLIIPKSLAGPLSHHNTREGYRTQMKGPWHSEELEIRFEECPGTKVHVEETCGTRGPSLRSTTASGRVIEEWCCRECTMPPLSFRAKDGCWYGMEIRPRKEPESNLVRSMVTAGSTDHMDHFSLGVLVILLMVQEGLKKRMTTKIIISTSMAVLVAMILGGFSMSDLAKLAILMGATFAEMNTGGDVAHLALIAAFKVRPALLVSFIFRANWTPRESMLLALASCLLQTAISALEGDLMVPINGFALAWLAIRAMVVPRTDNITLAILAALTPLARGTLLVAWRAGLATCGGFMLLSLKGKGSVKKNLPFVMALGLTAVRLVDPINVVGLLLLTRSGKRSWPPSEVLTAVGLICALAGGFAKADIEMAGPMAAVGLLIVSYVVSGKSVDMYIERAGDITWEKDAEVTGNSPRLDVALDESGDFSLVEDDGPPMREIILKVVLMAICGMNPIAIPFAAGAWYVYVKTGKRSGALWDVPAPKEVKKGETTDGVYRVMTRRLLGSTQVGVGVMQEGVFHTMWHVTKGSALRSGEGRLDPYWGDVKQDLVSYCGPWKLDAAWDGHSEVQLLAVPPGERARNIQTLPGIFKTKDGDIGAVALDYPAGTSGSPILDKCGRVIGLYGNGVVIKNGSYVSAITQGRREEETPVECFEPSMLKKKQLTVLDLHPGAGKTRRVLPEIVREAIKTRLRTVILAPTRVVAAEMEEALRGLPVRYMTTAVNVTHSGTEIVDLMCHATFTSRLLQPIRVPNYNLYIMDEAHFTDPSSIAARGYISTRVEMGEAAAIFMTATPPGTRDAFPDSNSPIMDTEVEVPERAWSSGFDWVTDHSGKTVWFVPSVRNGNEIAACLTKAGKRVIQLSRKTFETEFQKTKHQEWDFVVTTDISEMGANFKADRVIDSRRCLKPVILDGERVILAGPMPVTHASAAQRRGRIGRNPNKPGDEYLYGGGCAETDEDHAHWLEARMLLDNIYLQDGLIASLYRPEADKVAAIEGEFKLRTEQRKTFVELMKRGDLPVWLAYQVASAGITYTDRRWCFDGTTNNTIMEDSVPAEVWTRYGEKRVLKPRWMDARVCSDHAALKSFKEFAAGKRGAAFGVMEALGTLPGHMTERFQEAIDNLAVLMRAETGSRPYKAAAAQLPETLETIMLLGLLGTVSLGIFFVLMRNKGIGKMGFGMVTLGASAWLMWLSEIEPARIACVLIVVFLLLVVLIPEPEKQRSPQDNQMAIIIMVAVGLLGLITANELGWLERTKSDLSHLMGRREEGATIGFSMDIDLRPASAWAIYAALTTFITPAVQHAVTTSYNNYSLMAMATQAGVLFGMGKGMPFYAWDFGVPLLMIGCYSQLTPLTLIVAIILLVAHYMYLIPGLQAAAARAAQKRTAAGIMKNPVVDGIVVTDIDTMTIDPQVEKKMGQVLLIAVAVSSAILSRTAWGWGEAGALITAATSTLWEGSPNKYWNSSTATSLCNIFRGSYLAGASLIYTVTRNAGLVKRRGGGTGETLGEKWKARLNQMSALEFYSYKKSGITEVCREEARRALKDGVATGGHAVSRGSAKLRWLVERGYLQPYGKVIDLGCGRGGWSYYAATIRKVQEVKGYTKGGPGHEEPMLVQSYGWNIVRLKSGVDVFHMAAEPCDTLLCDIGESSSSPEVEEARTLRVLSMVGDWLEKRPGAFCIKVLCPYTSTMMETLERLQRRYGGGLVRVPLSRNSTHEMYWVSGAKSNTIKSVSTTSQLLLGRMDGPRRPVKYEEDVNLGSGTRAVVSCAEAPNMKIIGNRIERIRSEHAETWFFDENHPYRTWAYHGSYEAPTQGSASSLINGVVRLLSKPWDVVTGVTGIAMTDTTPYGQQRVFKEKVDTRVPDPQEGTRQVMSMVSSWLWKELGKHKRPRVCTKEEFINKVRSNAALGAIFEEEKEWKTAVEAVNDPRFWALVDKEREHHLRGECQSCVYNMMGKREKKQGEFGKAKGSRAIWYMWLGARFLEFEALGFLNEDHWMGRENSGGGVEGLGLQRLGYVLEEMSRIPGGRMYADDTAGWDTRISRFDLENEALITNQMEKGHRALALAIIKYTYQNKVVKVLRPAEKGKTVMDIISRQDQRGSGQVVTYALNTFTNLVVQLIRNMEAEEVLEMQDLWLLRRSEKVTNWLQSNGWDRLKRMAVSGDDCVVKPIDDRFAHALRFLNDMGKVRKDTQEWKPSTGWDNWEEVPFCSHHFNKLHLKDGRSIVVPCRHQDELIGRARVSPGAGWSIRETACLAKSYAQMWQLLYFHRRDLRLMANAICSSVPVDWVPTGRTTWSIHGKGEWMTTEDMLVVWNRVWIEENDHMEDKTPVTKWTDIPYLGKREDLWCGSLIGHRPRTTWAENIKNTVNMMRRIIGDEEKYVDYLSTQVRYLGEEGSTPGVL</sequence>
<protein>
    <recommendedName>
        <fullName>Genome polyprotein</fullName>
    </recommendedName>
    <component>
        <recommendedName>
            <fullName evidence="8">Capsid protein C</fullName>
        </recommendedName>
        <alternativeName>
            <fullName>Capsid protein</fullName>
        </alternativeName>
        <alternativeName>
            <fullName>Core protein</fullName>
        </alternativeName>
    </component>
    <component>
        <recommendedName>
            <fullName evidence="8">Protein prM</fullName>
        </recommendedName>
        <alternativeName>
            <fullName>Precursor membrane protein</fullName>
        </alternativeName>
    </component>
    <component>
        <recommendedName>
            <fullName evidence="8">Peptide pr</fullName>
        </recommendedName>
        <alternativeName>
            <fullName>Peptide precursor</fullName>
        </alternativeName>
    </component>
    <component>
        <recommendedName>
            <fullName evidence="8">Small envelope protein M</fullName>
        </recommendedName>
        <alternativeName>
            <fullName>Matrix protein</fullName>
        </alternativeName>
    </component>
    <component>
        <recommendedName>
            <fullName evidence="8">Envelope protein E</fullName>
        </recommendedName>
    </component>
    <component>
        <recommendedName>
            <fullName evidence="8">Non-structural protein 1</fullName>
            <shortName>NS1</shortName>
        </recommendedName>
    </component>
    <component>
        <recommendedName>
            <fullName evidence="8">Non-structural protein 2A</fullName>
            <shortName>NS2A</shortName>
        </recommendedName>
    </component>
    <component>
        <recommendedName>
            <fullName evidence="8">Serine protease subunit NS2B</fullName>
        </recommendedName>
        <alternativeName>
            <fullName>Flavivirin protease NS2B regulatory subunit</fullName>
        </alternativeName>
        <alternativeName>
            <fullName>Non-structural protein 2B</fullName>
        </alternativeName>
    </component>
    <component>
        <recommendedName>
            <fullName evidence="8">Serine protease NS3</fullName>
            <ecNumber>3.4.21.91</ecNumber>
            <ecNumber>3.6.1.15</ecNumber>
            <ecNumber>3.6.4.13</ecNumber>
        </recommendedName>
        <alternativeName>
            <fullName>Flavivirin protease NS3 catalytic subunit</fullName>
        </alternativeName>
        <alternativeName>
            <fullName>Non-structural protein 3</fullName>
        </alternativeName>
    </component>
    <component>
        <recommendedName>
            <fullName evidence="8">Non-structural protein 4A</fullName>
            <shortName>NS4A</shortName>
        </recommendedName>
    </component>
    <component>
        <recommendedName>
            <fullName evidence="8">Peptide 2k</fullName>
        </recommendedName>
    </component>
    <component>
        <recommendedName>
            <fullName evidence="8">Non-structural protein 4B</fullName>
            <shortName>NS4B</shortName>
        </recommendedName>
    </component>
    <component>
        <recommendedName>
            <fullName evidence="8">RNA-directed RNA polymerase NS5</fullName>
            <ecNumber>2.1.1.56</ecNumber>
            <ecNumber>2.1.1.57</ecNumber>
            <ecNumber>2.7.7.48</ecNumber>
        </recommendedName>
        <alternativeName>
            <fullName>NS5</fullName>
        </alternativeName>
    </component>
</protein>
<organism>
    <name type="scientific">Zika virus (isolate ZIKV/Human/Cambodia/FSS13025/2010)</name>
    <name type="common">ZIKV</name>
    <dbReference type="NCBI Taxonomy" id="2316109"/>
    <lineage>
        <taxon>Viruses</taxon>
        <taxon>Riboviria</taxon>
        <taxon>Orthornavirae</taxon>
        <taxon>Kitrinoviricota</taxon>
        <taxon>Flasuviricetes</taxon>
        <taxon>Amarillovirales</taxon>
        <taxon>Flaviviridae</taxon>
        <taxon>Orthoflavivirus</taxon>
        <taxon>Orthoflavivirus zikaense</taxon>
    </lineage>
</organism>
<organismHost>
    <name type="scientific">Homo sapiens</name>
    <name type="common">Human</name>
    <dbReference type="NCBI Taxonomy" id="9606"/>
</organismHost>
<feature type="chain" id="PRO_0000445659" description="Genome polyprotein">
    <location>
        <begin position="1"/>
        <end position="3423"/>
    </location>
</feature>
<feature type="chain" id="PRO_0000445660" description="Capsid protein C">
    <location>
        <begin position="1"/>
        <end position="104"/>
    </location>
</feature>
<feature type="propeptide" id="PRO_0000445661" description="ER anchor for capsid protein C, removed in mature form by serine protease NS3">
    <location>
        <begin position="105"/>
        <end position="122"/>
    </location>
</feature>
<feature type="chain" id="PRO_0000445662" description="Protein prM">
    <location>
        <begin position="123"/>
        <end position="290"/>
    </location>
</feature>
<feature type="chain" id="PRO_0000445663" description="Peptide pr">
    <location>
        <begin position="123"/>
        <end position="215"/>
    </location>
</feature>
<feature type="chain" id="PRO_0000445664" description="Small envelope protein M">
    <location>
        <begin position="216"/>
        <end position="290"/>
    </location>
</feature>
<feature type="chain" id="PRO_0000445665" description="Envelope protein E">
    <location>
        <begin position="291"/>
        <end position="794"/>
    </location>
</feature>
<feature type="chain" id="PRO_0000445666" description="Non-structural protein 1">
    <location>
        <begin position="795"/>
        <end position="1146"/>
    </location>
</feature>
<feature type="chain" id="PRO_0000445667" description="Non-structural protein 2A">
    <location>
        <begin position="1147"/>
        <end position="1372"/>
    </location>
</feature>
<feature type="chain" id="PRO_0000445668" description="Serine protease subunit NS2B">
    <location>
        <begin position="1373"/>
        <end position="1502"/>
    </location>
</feature>
<feature type="chain" id="PRO_0000445669" description="Serine protease NS3">
    <location>
        <begin position="1503"/>
        <end position="2119"/>
    </location>
</feature>
<feature type="chain" id="PRO_0000445670" description="Non-structural protein 4A">
    <location>
        <begin position="2120"/>
        <end position="2246"/>
    </location>
</feature>
<feature type="peptide" id="PRO_0000445671" description="Peptide 2k">
    <location>
        <begin position="2247"/>
        <end position="2269"/>
    </location>
</feature>
<feature type="chain" id="PRO_0000445672" description="Non-structural protein 4B">
    <location>
        <begin position="2270"/>
        <end position="2520"/>
    </location>
</feature>
<feature type="chain" id="PRO_0000445673" description="RNA-directed RNA polymerase NS5">
    <location>
        <begin position="2521"/>
        <end position="3423"/>
    </location>
</feature>
<feature type="topological domain" description="Cytoplasmic" evidence="26">
    <location>
        <begin position="1"/>
        <end position="104"/>
    </location>
</feature>
<feature type="transmembrane region" description="Helical" evidence="13">
    <location>
        <begin position="105"/>
        <end position="125"/>
    </location>
</feature>
<feature type="topological domain" description="Extracellular" evidence="26">
    <location>
        <begin position="126"/>
        <end position="249"/>
    </location>
</feature>
<feature type="transmembrane region" description="Helical" evidence="13">
    <location>
        <begin position="250"/>
        <end position="269"/>
    </location>
</feature>
<feature type="topological domain" description="Cytoplasmic" evidence="26">
    <location>
        <begin position="270"/>
        <end position="274"/>
    </location>
</feature>
<feature type="transmembrane region" description="Helical" evidence="26">
    <location>
        <begin position="275"/>
        <end position="290"/>
    </location>
</feature>
<feature type="topological domain" description="Extracellular" evidence="26">
    <location>
        <begin position="291"/>
        <end position="745"/>
    </location>
</feature>
<feature type="transmembrane region" description="Helical" evidence="13">
    <location>
        <begin position="746"/>
        <end position="767"/>
    </location>
</feature>
<feature type="topological domain" description="Cytoplasmic" evidence="26">
    <location>
        <begin position="768"/>
        <end position="773"/>
    </location>
</feature>
<feature type="transmembrane region" description="Helical" evidence="13">
    <location>
        <begin position="774"/>
        <end position="794"/>
    </location>
</feature>
<feature type="topological domain" description="Lumenal" evidence="26">
    <location>
        <begin position="795"/>
        <end position="1177"/>
    </location>
</feature>
<feature type="transmembrane region" description="Helical" evidence="13">
    <location>
        <begin position="1178"/>
        <end position="1198"/>
    </location>
</feature>
<feature type="topological domain" description="Cytoplasmic" evidence="26">
    <location>
        <begin position="1199"/>
        <end position="1220"/>
    </location>
</feature>
<feature type="transmembrane region" description="Helical" evidence="13">
    <location>
        <begin position="1221"/>
        <end position="1241"/>
    </location>
</feature>
<feature type="topological domain" description="Lumenal" evidence="26">
    <location>
        <begin position="1242"/>
        <end position="1270"/>
    </location>
</feature>
<feature type="transmembrane region" description="Helical" evidence="13">
    <location>
        <begin position="1271"/>
        <end position="1291"/>
    </location>
</feature>
<feature type="topological domain" description="Cytoplasmic" evidence="26">
    <location>
        <begin position="1292"/>
        <end position="1295"/>
    </location>
</feature>
<feature type="transmembrane region" description="Helical" evidence="13">
    <location>
        <begin position="1296"/>
        <end position="1316"/>
    </location>
</feature>
<feature type="topological domain" description="Lumenal" evidence="26">
    <location>
        <begin position="1317"/>
        <end position="1345"/>
    </location>
</feature>
<feature type="transmembrane region" description="Helical" evidence="13">
    <location>
        <begin position="1346"/>
        <end position="1366"/>
    </location>
</feature>
<feature type="topological domain" description="Cytoplasmic" evidence="26">
    <location>
        <begin position="1367"/>
        <end position="1373"/>
    </location>
</feature>
<feature type="transmembrane region" description="Helical" evidence="13">
    <location>
        <begin position="1374"/>
        <end position="1394"/>
    </location>
</feature>
<feature type="topological domain" description="Lumenal" evidence="26">
    <location>
        <begin position="1395"/>
        <end position="1397"/>
    </location>
</feature>
<feature type="transmembrane region" description="Helical" evidence="13">
    <location>
        <begin position="1398"/>
        <end position="1418"/>
    </location>
</feature>
<feature type="topological domain" description="Cytoplasmic" evidence="26">
    <location>
        <begin position="1419"/>
        <end position="1472"/>
    </location>
</feature>
<feature type="intramembrane region" description="Helical" evidence="13">
    <location>
        <begin position="1473"/>
        <end position="1493"/>
    </location>
</feature>
<feature type="topological domain" description="Lumenal" evidence="26">
    <location>
        <begin position="1494"/>
        <end position="2170"/>
    </location>
</feature>
<feature type="transmembrane region" description="Helical" evidence="13">
    <location>
        <begin position="2171"/>
        <end position="2191"/>
    </location>
</feature>
<feature type="topological domain" description="Lumenal" evidence="26">
    <location>
        <begin position="2192"/>
        <end position="2195"/>
    </location>
</feature>
<feature type="intramembrane region" description="Helical" evidence="13">
    <location>
        <begin position="2196"/>
        <end position="2216"/>
    </location>
</feature>
<feature type="topological domain" description="Cytoplasmic" evidence="26">
    <location>
        <begin position="2217"/>
        <end position="2218"/>
    </location>
</feature>
<feature type="transmembrane region" description="Helical" evidence="13">
    <location>
        <begin position="2219"/>
        <end position="2239"/>
    </location>
</feature>
<feature type="topological domain" description="Lumenal" evidence="26">
    <location>
        <begin position="2240"/>
        <end position="2254"/>
    </location>
</feature>
<feature type="intramembrane region" description="Helical; Note=Signal for NS4B" evidence="26">
    <location>
        <begin position="2255"/>
        <end position="2269"/>
    </location>
</feature>
<feature type="topological domain" description="Lumenal" evidence="26">
    <location>
        <begin position="2270"/>
        <end position="2307"/>
    </location>
</feature>
<feature type="intramembrane region" description="Helical" evidence="13">
    <location>
        <begin position="2308"/>
        <end position="2328"/>
    </location>
</feature>
<feature type="topological domain" description="Lumenal" evidence="26">
    <location>
        <begin position="2329"/>
        <end position="2344"/>
    </location>
</feature>
<feature type="transmembrane region" description="Helical" evidence="13">
    <location>
        <begin position="2345"/>
        <end position="2365"/>
    </location>
</feature>
<feature type="topological domain" description="Cytoplasmic" evidence="26">
    <location>
        <begin position="2366"/>
        <end position="2375"/>
    </location>
</feature>
<feature type="transmembrane region" description="Helical" evidence="13">
    <location>
        <begin position="2376"/>
        <end position="2396"/>
    </location>
</feature>
<feature type="topological domain" description="Lumenal" evidence="26">
    <location>
        <begin position="2397"/>
        <end position="2441"/>
    </location>
</feature>
<feature type="transmembrane region" description="Helical" evidence="13">
    <location>
        <begin position="2442"/>
        <end position="2462"/>
    </location>
</feature>
<feature type="topological domain" description="Cytoplasmic" evidence="26">
    <location>
        <begin position="2463"/>
        <end position="3423"/>
    </location>
</feature>
<feature type="domain" description="Peptidase S7" evidence="18">
    <location>
        <begin position="1503"/>
        <end position="1680"/>
    </location>
</feature>
<feature type="domain" description="Helicase ATP-binding" evidence="15">
    <location>
        <begin position="1683"/>
        <end position="1839"/>
    </location>
</feature>
<feature type="domain" description="Helicase C-terminal" evidence="16">
    <location>
        <begin position="1834"/>
        <end position="2013"/>
    </location>
</feature>
<feature type="domain" description="mRNA cap 0-1 NS5-type MT" evidence="19">
    <location>
        <begin position="2521"/>
        <end position="2785"/>
    </location>
</feature>
<feature type="domain" description="RdRp catalytic" evidence="14">
    <location>
        <begin position="3049"/>
        <end position="3199"/>
    </location>
</feature>
<feature type="region of interest" description="Disordered" evidence="10">
    <location>
        <begin position="1"/>
        <end position="25"/>
    </location>
</feature>
<feature type="region of interest" description="Hydrophobic; homodimerization of capsid protein C" evidence="9">
    <location>
        <begin position="37"/>
        <end position="72"/>
    </location>
</feature>
<feature type="region of interest" description="Fusion peptide" evidence="6">
    <location>
        <begin position="388"/>
        <end position="401"/>
    </location>
</feature>
<feature type="region of interest" description="Interacts with and activates NS3 protease" evidence="17">
    <location>
        <begin position="1425"/>
        <end position="1464"/>
    </location>
</feature>
<feature type="region of interest" description="Disordered" evidence="10">
    <location>
        <begin position="1429"/>
        <end position="1451"/>
    </location>
</feature>
<feature type="region of interest" description="Important for RNA-binding" evidence="7">
    <location>
        <begin position="1687"/>
        <end position="1690"/>
    </location>
</feature>
<feature type="region of interest" description="SUMO-interacting motif (SIM)" evidence="1">
    <location>
        <begin position="2597"/>
        <end position="2600"/>
    </location>
</feature>
<feature type="short sequence motif" description="DEAH box" evidence="15">
    <location>
        <begin position="1787"/>
        <end position="1790"/>
    </location>
</feature>
<feature type="short sequence motif" description="Nuclear localization signal (NLS)" evidence="10">
    <location>
        <begin position="2908"/>
        <end position="2914"/>
    </location>
</feature>
<feature type="active site" description="Charge relay system; for serine protease NS3 activity" evidence="18">
    <location>
        <position position="1553"/>
    </location>
</feature>
<feature type="active site" description="Charge relay system; for serine protease NS3 activity" evidence="18">
    <location>
        <position position="1577"/>
    </location>
</feature>
<feature type="active site" description="Charge relay system; for serine protease NS3 activity" evidence="18">
    <location>
        <position position="1637"/>
    </location>
</feature>
<feature type="active site" description="For 2'-O-MTase activity" evidence="11">
    <location>
        <position position="2581"/>
    </location>
</feature>
<feature type="active site" description="For 2'-O-MTase activity" evidence="11">
    <location>
        <position position="2666"/>
    </location>
</feature>
<feature type="active site" description="For 2'-O-MTase activity" evidence="11">
    <location>
        <position position="2702"/>
    </location>
</feature>
<feature type="active site" description="For 2'-O-MTase activity" evidence="11">
    <location>
        <position position="2738"/>
    </location>
</feature>
<feature type="binding site" evidence="15">
    <location>
        <begin position="1696"/>
        <end position="1703"/>
    </location>
    <ligand>
        <name>ATP</name>
        <dbReference type="ChEBI" id="CHEBI:30616"/>
    </ligand>
</feature>
<feature type="binding site" evidence="1">
    <location>
        <begin position="2533"/>
        <end position="2539"/>
    </location>
    <ligand>
        <name>GTP</name>
        <dbReference type="ChEBI" id="CHEBI:37565"/>
    </ligand>
</feature>
<feature type="binding site" evidence="19">
    <location>
        <position position="2576"/>
    </location>
    <ligand>
        <name>S-adenosyl-L-methionine</name>
        <dbReference type="ChEBI" id="CHEBI:59789"/>
    </ligand>
</feature>
<feature type="binding site" evidence="19">
    <location>
        <position position="2606"/>
    </location>
    <ligand>
        <name>S-adenosyl-L-methionine</name>
        <dbReference type="ChEBI" id="CHEBI:59789"/>
    </ligand>
</feature>
<feature type="binding site" evidence="19">
    <location>
        <position position="2607"/>
    </location>
    <ligand>
        <name>S-adenosyl-L-methionine</name>
        <dbReference type="ChEBI" id="CHEBI:59789"/>
    </ligand>
</feature>
<feature type="binding site" evidence="19">
    <location>
        <position position="2624"/>
    </location>
    <ligand>
        <name>S-adenosyl-L-methionine</name>
        <dbReference type="ChEBI" id="CHEBI:59789"/>
    </ligand>
</feature>
<feature type="binding site" evidence="19">
    <location>
        <position position="2625"/>
    </location>
    <ligand>
        <name>S-adenosyl-L-methionine</name>
        <dbReference type="ChEBI" id="CHEBI:59789"/>
    </ligand>
</feature>
<feature type="binding site" evidence="1">
    <location>
        <position position="2630"/>
    </location>
    <ligand>
        <name>S-adenosyl-L-methionine</name>
        <dbReference type="ChEBI" id="CHEBI:59789"/>
    </ligand>
</feature>
<feature type="binding site" evidence="1">
    <location>
        <position position="2631"/>
    </location>
    <ligand>
        <name>S-adenosyl-L-methionine</name>
        <dbReference type="ChEBI" id="CHEBI:59789"/>
    </ligand>
</feature>
<feature type="binding site" evidence="19">
    <location>
        <position position="2651"/>
    </location>
    <ligand>
        <name>S-adenosyl-L-methionine</name>
        <dbReference type="ChEBI" id="CHEBI:59789"/>
    </ligand>
</feature>
<feature type="binding site" evidence="19">
    <location>
        <position position="2652"/>
    </location>
    <ligand>
        <name>S-adenosyl-L-methionine</name>
        <dbReference type="ChEBI" id="CHEBI:59789"/>
    </ligand>
</feature>
<feature type="binding site" evidence="1">
    <location>
        <position position="2666"/>
    </location>
    <ligand>
        <name>S-adenosyl-L-methionine</name>
        <dbReference type="ChEBI" id="CHEBI:59789"/>
    </ligand>
</feature>
<feature type="binding site" evidence="19">
    <location>
        <position position="2667"/>
    </location>
    <ligand>
        <name>S-adenosyl-L-methionine</name>
        <dbReference type="ChEBI" id="CHEBI:59789"/>
    </ligand>
</feature>
<feature type="binding site" evidence="1">
    <location>
        <begin position="2669"/>
        <end position="2675"/>
    </location>
    <ligand>
        <name>GTP</name>
        <dbReference type="ChEBI" id="CHEBI:37565"/>
    </ligand>
</feature>
<feature type="binding site" evidence="1">
    <location>
        <begin position="2733"/>
        <end position="2735"/>
    </location>
    <ligand>
        <name>GTP</name>
        <dbReference type="ChEBI" id="CHEBI:37565"/>
    </ligand>
</feature>
<feature type="binding site" evidence="19">
    <location>
        <position position="2740"/>
    </location>
    <ligand>
        <name>S-adenosyl-L-methionine</name>
        <dbReference type="ChEBI" id="CHEBI:59789"/>
    </ligand>
</feature>
<feature type="binding site" evidence="10">
    <location>
        <position position="2959"/>
    </location>
    <ligand>
        <name>Zn(2+)</name>
        <dbReference type="ChEBI" id="CHEBI:29105"/>
        <label>1</label>
    </ligand>
</feature>
<feature type="binding site" evidence="10">
    <location>
        <position position="2963"/>
    </location>
    <ligand>
        <name>Zn(2+)</name>
        <dbReference type="ChEBI" id="CHEBI:29105"/>
        <label>1</label>
    </ligand>
</feature>
<feature type="binding site" evidence="10">
    <location>
        <position position="2968"/>
    </location>
    <ligand>
        <name>Zn(2+)</name>
        <dbReference type="ChEBI" id="CHEBI:29105"/>
        <label>1</label>
    </ligand>
</feature>
<feature type="binding site" evidence="10">
    <location>
        <position position="2971"/>
    </location>
    <ligand>
        <name>Zn(2+)</name>
        <dbReference type="ChEBI" id="CHEBI:29105"/>
        <label>1</label>
    </ligand>
</feature>
<feature type="binding site" evidence="10">
    <location>
        <position position="3234"/>
    </location>
    <ligand>
        <name>Zn(2+)</name>
        <dbReference type="ChEBI" id="CHEBI:29105"/>
        <label>2</label>
    </ligand>
</feature>
<feature type="binding site" evidence="10">
    <location>
        <position position="3250"/>
    </location>
    <ligand>
        <name>Zn(2+)</name>
        <dbReference type="ChEBI" id="CHEBI:29105"/>
        <label>2</label>
    </ligand>
</feature>
<feature type="binding site" evidence="5">
    <location>
        <position position="3369"/>
    </location>
    <ligand>
        <name>Zn(2+)</name>
        <dbReference type="ChEBI" id="CHEBI:29105"/>
        <label>2</label>
    </ligand>
</feature>
<feature type="site" description="Cleavage; by viral protease NS3" evidence="10">
    <location>
        <begin position="104"/>
        <end position="105"/>
    </location>
</feature>
<feature type="site" description="Cleavage; by host signal peptidase" evidence="10">
    <location>
        <begin position="122"/>
        <end position="123"/>
    </location>
</feature>
<feature type="site" description="Cleavage; by host furin" evidence="10">
    <location>
        <begin position="215"/>
        <end position="216"/>
    </location>
</feature>
<feature type="site" description="Cleavage; by host signal peptidase" evidence="3">
    <location>
        <begin position="290"/>
        <end position="291"/>
    </location>
</feature>
<feature type="site" description="Cleavage; by host signal peptidase" evidence="3">
    <location>
        <begin position="794"/>
        <end position="795"/>
    </location>
</feature>
<feature type="site" description="Cleavage; by host" evidence="3">
    <location>
        <begin position="1146"/>
        <end position="1147"/>
    </location>
</feature>
<feature type="site" description="Cleavage; by viral protease NS3" evidence="3">
    <location>
        <begin position="1372"/>
        <end position="1373"/>
    </location>
</feature>
<feature type="site" description="Cleavage; by autolysis" evidence="3">
    <location>
        <begin position="1502"/>
        <end position="1503"/>
    </location>
</feature>
<feature type="site" description="Involved in NS3 ATPase and RTPase activities" evidence="5">
    <location>
        <position position="1958"/>
    </location>
</feature>
<feature type="site" description="Involved in NS3 ATPase and RTPase activities" evidence="5">
    <location>
        <position position="1961"/>
    </location>
</feature>
<feature type="site" description="Cleavage; by autolysis" evidence="3">
    <location>
        <begin position="2119"/>
        <end position="2120"/>
    </location>
</feature>
<feature type="site" description="Cleavage; by viral protease NS3" evidence="3">
    <location>
        <begin position="2246"/>
        <end position="2247"/>
    </location>
</feature>
<feature type="site" description="Cleavage; by host signal peptidase" evidence="3">
    <location>
        <begin position="2269"/>
        <end position="2270"/>
    </location>
</feature>
<feature type="site" description="Cleavage; by viral protease NS3" evidence="3">
    <location>
        <begin position="2520"/>
        <end position="2521"/>
    </location>
</feature>
<feature type="site" description="mRNA cap binding" evidence="19">
    <location>
        <position position="2533"/>
    </location>
</feature>
<feature type="site" description="mRNA cap binding; via carbonyl oxygen" evidence="19">
    <location>
        <position position="2536"/>
    </location>
</feature>
<feature type="site" description="mRNA cap binding" evidence="19">
    <location>
        <position position="2537"/>
    </location>
</feature>
<feature type="site" description="mRNA cap binding; via carbonyl oxygen" evidence="19">
    <location>
        <position position="2539"/>
    </location>
</feature>
<feature type="site" description="mRNA cap binding" evidence="19">
    <location>
        <position position="2544"/>
    </location>
</feature>
<feature type="site" description="mRNA cap binding" evidence="19">
    <location>
        <position position="2548"/>
    </location>
</feature>
<feature type="site" description="Essential for 2'-O-methyltransferase activity" evidence="19">
    <location>
        <position position="2581"/>
    </location>
</feature>
<feature type="site" description="Essential for 2'-O-methyltransferase and N-7 methyltransferase activity" evidence="19">
    <location>
        <position position="2666"/>
    </location>
</feature>
<feature type="site" description="mRNA cap binding" evidence="19">
    <location>
        <position position="2670"/>
    </location>
</feature>
<feature type="site" description="Essential for 2'-O-methyltransferase activity" evidence="19">
    <location>
        <position position="2702"/>
    </location>
</feature>
<feature type="site" description="mRNA cap binding" evidence="19">
    <location>
        <position position="2733"/>
    </location>
</feature>
<feature type="site" description="mRNA cap binding" evidence="19">
    <location>
        <position position="2735"/>
    </location>
</feature>
<feature type="site" description="Essential for 2'-O-methyltransferase activity" evidence="19">
    <location>
        <position position="2738"/>
    </location>
</feature>
<feature type="modified residue" description="N6-acetyllysine; by host" evidence="10">
    <location>
        <position position="1891"/>
    </location>
</feature>
<feature type="modified residue" description="Phosphoserine" evidence="2">
    <location>
        <position position="2576"/>
    </location>
</feature>
<feature type="glycosylation site" description="N-linked (GlcNAc...) asparagine; by host" evidence="13">
    <location>
        <position position="192"/>
    </location>
</feature>
<feature type="glycosylation site" description="N-linked (GlcNAc...) asparagine; by host" evidence="1">
    <location>
        <position position="444"/>
    </location>
</feature>
<feature type="glycosylation site" description="N-linked (GlcNAc...) asparagine; by host" evidence="10">
    <location>
        <position position="924"/>
    </location>
</feature>
<feature type="glycosylation site" description="N-linked (GlcNAc...) asparagine; by host" evidence="10">
    <location>
        <position position="1001"/>
    </location>
</feature>
<feature type="disulfide bond" evidence="8">
    <location>
        <begin position="350"/>
        <end position="406"/>
    </location>
</feature>
<feature type="disulfide bond" evidence="8">
    <location>
        <begin position="382"/>
        <end position="411"/>
    </location>
</feature>
<feature type="disulfide bond" evidence="8">
    <location>
        <begin position="480"/>
        <end position="581"/>
    </location>
</feature>
<feature type="disulfide bond" evidence="8">
    <location>
        <begin position="598"/>
        <end position="629"/>
    </location>
</feature>
<feature type="disulfide bond" evidence="12">
    <location>
        <begin position="798"/>
        <end position="809"/>
    </location>
</feature>
<feature type="disulfide bond" evidence="12">
    <location>
        <begin position="849"/>
        <end position="937"/>
    </location>
</feature>
<feature type="disulfide bond" evidence="12">
    <location>
        <begin position="973"/>
        <end position="1017"/>
    </location>
</feature>
<feature type="disulfide bond" evidence="12">
    <location>
        <begin position="1074"/>
        <end position="1123"/>
    </location>
</feature>
<feature type="disulfide bond" evidence="12">
    <location>
        <begin position="1085"/>
        <end position="1106"/>
    </location>
</feature>
<feature type="disulfide bond" evidence="12">
    <location>
        <begin position="1107"/>
        <end position="1110"/>
    </location>
</feature>
<feature type="cross-link" description="Glycyl lysine isopeptide (Lys-Gly) (interchain with G-Cter in ubiquitin)" evidence="22">
    <location>
        <position position="328"/>
    </location>
</feature>
<feature type="cross-link" description="Glycyl lysine isopeptide (Lys-Gly) (interchain with G-Cter in ubiquitin)" evidence="22">
    <location>
        <position position="571"/>
    </location>
</feature>
<feature type="mutagenesis site" description="Increased viral infectivity." evidence="20">
    <original>S</original>
    <variation>N</variation>
    <location>
        <position position="139"/>
    </location>
</feature>
<feature type="mutagenesis site" description="Complete loss of binding to host HAVCR1." evidence="22">
    <original>K</original>
    <variation>R</variation>
    <location>
        <position position="328"/>
    </location>
</feature>
<feature type="mutagenesis site" description="Reduced ubiquitination of Envelope protein E." evidence="22">
    <original>K</original>
    <variation>R</variation>
    <location>
        <position position="571"/>
    </location>
</feature>
<feature type="mutagenesis site" description="Complete loss of virus production by impairing NS2A binding to prM/E and NS2B/NS3." evidence="21">
    <original>E</original>
    <variation>A</variation>
    <location>
        <position position="1249"/>
    </location>
</feature>
<feature type="strand" evidence="27">
    <location>
        <begin position="600"/>
        <end position="604"/>
    </location>
</feature>
<feature type="strand" evidence="27">
    <location>
        <begin position="615"/>
        <end position="623"/>
    </location>
</feature>
<feature type="strand" evidence="27">
    <location>
        <begin position="633"/>
        <end position="636"/>
    </location>
</feature>
<feature type="strand" evidence="27">
    <location>
        <begin position="638"/>
        <end position="640"/>
    </location>
</feature>
<feature type="strand" evidence="27">
    <location>
        <begin position="650"/>
        <end position="652"/>
    </location>
</feature>
<feature type="strand" evidence="27">
    <location>
        <begin position="657"/>
        <end position="661"/>
    </location>
</feature>
<feature type="strand" evidence="27">
    <location>
        <begin position="663"/>
        <end position="668"/>
    </location>
</feature>
<feature type="strand" evidence="27">
    <location>
        <begin position="672"/>
        <end position="679"/>
    </location>
</feature>
<feature type="strand" evidence="27">
    <location>
        <begin position="681"/>
        <end position="684"/>
    </location>
</feature>
<feature type="strand" evidence="27">
    <location>
        <begin position="690"/>
        <end position="692"/>
    </location>
</feature>
<accession>A0A142I5B9</accession>
<accession>H9A910</accession>
<keyword id="KW-0002">3D-structure</keyword>
<keyword id="KW-0007">Acetylation</keyword>
<keyword id="KW-1072">Activation of host autophagy by virus</keyword>
<keyword id="KW-0024">Alternative initiation</keyword>
<keyword id="KW-0067">ATP-binding</keyword>
<keyword id="KW-0167">Capsid protein</keyword>
<keyword id="KW-1015">Disulfide bond</keyword>
<keyword id="KW-1170">Fusion of virus membrane with host endosomal membrane</keyword>
<keyword id="KW-1168">Fusion of virus membrane with host membrane</keyword>
<keyword id="KW-0325">Glycoprotein</keyword>
<keyword id="KW-0342">GTP-binding</keyword>
<keyword id="KW-0347">Helicase</keyword>
<keyword id="KW-1035">Host cytoplasm</keyword>
<keyword id="KW-1038">Host endoplasmic reticulum</keyword>
<keyword id="KW-1043">Host membrane</keyword>
<keyword id="KW-1048">Host nucleus</keyword>
<keyword id="KW-0945">Host-virus interaction</keyword>
<keyword id="KW-0378">Hydrolase</keyword>
<keyword id="KW-1090">Inhibition of host innate immune response by virus</keyword>
<keyword id="KW-1114">Inhibition of host interferon signaling pathway by virus</keyword>
<keyword id="KW-1106">Inhibition of host STAT2 by virus</keyword>
<keyword id="KW-0922">Interferon antiviral system evasion</keyword>
<keyword id="KW-1017">Isopeptide bond</keyword>
<keyword id="KW-0472">Membrane</keyword>
<keyword id="KW-0479">Metal-binding</keyword>
<keyword id="KW-0489">Methyltransferase</keyword>
<keyword id="KW-0506">mRNA capping</keyword>
<keyword id="KW-0507">mRNA processing</keyword>
<keyword id="KW-0547">Nucleotide-binding</keyword>
<keyword id="KW-0548">Nucleotidyltransferase</keyword>
<keyword id="KW-0597">Phosphoprotein</keyword>
<keyword id="KW-0645">Protease</keyword>
<keyword id="KW-0694">RNA-binding</keyword>
<keyword id="KW-0696">RNA-directed RNA polymerase</keyword>
<keyword id="KW-0949">S-adenosyl-L-methionine</keyword>
<keyword id="KW-0964">Secreted</keyword>
<keyword id="KW-0720">Serine protease</keyword>
<keyword id="KW-0808">Transferase</keyword>
<keyword id="KW-0812">Transmembrane</keyword>
<keyword id="KW-1133">Transmembrane helix</keyword>
<keyword id="KW-0832">Ubl conjugation</keyword>
<keyword id="KW-1161">Viral attachment to host cell</keyword>
<keyword id="KW-0899">Viral immunoevasion</keyword>
<keyword id="KW-1162">Viral penetration into host cytoplasm</keyword>
<keyword id="KW-0693">Viral RNA replication</keyword>
<keyword id="KW-0946">Virion</keyword>
<keyword id="KW-1160">Virus entry into host cell</keyword>
<keyword id="KW-0862">Zinc</keyword>
<proteinExistence type="evidence at protein level"/>
<reference key="1">
    <citation type="journal article" date="2012" name="PLoS Negl. Trop. Dis.">
        <title>Genetic characterization of zika virus strains: geographic expansion of the asian lineage.</title>
        <authorList>
            <person name="Haddow A.D."/>
            <person name="Schuh A.J."/>
            <person name="Yasuda C.Y."/>
            <person name="Kasper M.R."/>
            <person name="Heang V."/>
            <person name="Huy R."/>
            <person name="Guzman H."/>
            <person name="Tesh R.B."/>
            <person name="Weaver S.C."/>
        </authorList>
    </citation>
    <scope>NUCLEOTIDE SEQUENCE [GENOMIC DNA]</scope>
</reference>
<reference key="2">
    <citation type="journal article" date="2016" name="Genome Announc.">
        <title>Complete Genome Sequences of Five Zika Virus Isolates.</title>
        <authorList>
            <person name="Ladner J.T."/>
            <person name="Wiley M.R."/>
            <person name="Prieto K."/>
            <person name="Yasuda C.Y."/>
            <person name="Nagle E."/>
            <person name="Kasper M.R."/>
            <person name="Reyes D."/>
            <person name="Vasilakis N."/>
            <person name="Heang V."/>
            <person name="Weaver S.C."/>
            <person name="Haddow A."/>
            <person name="Tesh R.B."/>
            <person name="Sovann L."/>
            <person name="Palacios G."/>
        </authorList>
    </citation>
    <scope>NUCLEOTIDE SEQUENCE [LARGE SCALE GENOMIC DNA]</scope>
</reference>
<reference key="3">
    <citation type="journal article" date="2017" name="Science">
        <title>A single mutation in the prM protein of Zika virus contributes to fetal microcephaly.</title>
        <authorList>
            <person name="Yuan L."/>
            <person name="Huang X.Y."/>
            <person name="Liu Z.Y."/>
            <person name="Zhang F."/>
            <person name="Zhu X.L."/>
            <person name="Yu J.Y."/>
            <person name="Ji X."/>
            <person name="Xu Y.P."/>
            <person name="Li G."/>
            <person name="Li C."/>
            <person name="Wang H.J."/>
            <person name="Deng Y.Q."/>
            <person name="Wu M."/>
            <person name="Cheng M.L."/>
            <person name="Ye Q."/>
            <person name="Xie D.Y."/>
            <person name="Li X.F."/>
            <person name="Wang X."/>
            <person name="Shi W."/>
            <person name="Hu B."/>
            <person name="Shi P.Y."/>
            <person name="Xu Z."/>
            <person name="Qin C.F."/>
        </authorList>
    </citation>
    <scope>MUTAGENESIS OF SER-139</scope>
</reference>
<reference key="4">
    <citation type="journal article" date="2019" name="MBio">
        <title>Zika Virus NS2A-Mediated Virion Assembly.</title>
        <authorList>
            <person name="Zhang X."/>
            <person name="Xie X."/>
            <person name="Xia H."/>
            <person name="Zou J."/>
            <person name="Huang L."/>
            <person name="Popov V.L."/>
            <person name="Chen X."/>
            <person name="Shi P.Y."/>
        </authorList>
    </citation>
    <scope>FUNCTION</scope>
    <scope>MUTAGENESIS OF GLU-1249</scope>
    <scope>INTERACTION WITH ENVELOPE PROTEIN E (PROTEIN PRM)</scope>
    <scope>INTERACTION WITH ENVELOPE PROTEIN E (NON-STRUCTURAL PROTEIN 2A)</scope>
    <scope>INTERACTION WITH SERINE PROTEASE SUBUNIT NS2B (NON-STRUCTURAL PROTEIN 2A)</scope>
    <scope>INTERACTION WITH SERINE PROTEASE NS3 (NON-STRUCTURAL PROTEIN 2A)</scope>
    <scope>INTERACTION NON-STRUCTURAL PROTEIN 2A (ENVELOPE PROTEIN E)</scope>
    <scope>INTERACTION NON-STRUCTURAL PROTEIN 2A (SERINE PROTEASE SUBUNIT NS2B)</scope>
    <scope>INTERACTION NON-STRUCTURAL PROTEIN 2A (SERINE PROTEASE NS3)</scope>
    <scope>INTERACTION NON-STRUCTURAL PROTEIN 2A (PROTEIN PRM)</scope>
</reference>
<reference key="5">
    <citation type="journal article" date="2020" name="Nature">
        <title>Envelope protein ubiquitination drives entry and pathogenesis of Zika virus.</title>
        <authorList>
            <person name="Giraldo M.I."/>
            <person name="Xia H."/>
            <person name="Aguilera-Aguirre L."/>
            <person name="Hage A."/>
            <person name="van Tol S."/>
            <person name="Shan C."/>
            <person name="Xie X."/>
            <person name="Sturdevant G.L."/>
            <person name="Robertson S.J."/>
            <person name="McNally K.L."/>
            <person name="Meade-White K."/>
            <person name="Azar S.R."/>
            <person name="Rossi S.L."/>
            <person name="Maury W."/>
            <person name="Woodson M."/>
            <person name="Ramage H."/>
            <person name="Johnson J.R."/>
            <person name="Krogan N.J."/>
            <person name="Morais M.C."/>
            <person name="Best S.M."/>
            <person name="Shi P.Y."/>
            <person name="Rajsbaum R."/>
        </authorList>
    </citation>
    <scope>UBIQUITINATION (ENVELOPE PROTEIN E)</scope>
    <scope>FUNCTION (ENVELOPE PROTEIN E)</scope>
    <scope>MUTAGENESIS OF LYS-328 AND LYS-571</scope>
    <scope>INTERACTION WITH HOST HAVCR1 (ENVELOPE PROTEIN E)</scope>
</reference>
<reference key="6">
    <citation type="journal article" date="2020" name="Nat. Commun.">
        <title>Chemical proteomics tracks virus entry and uncovers NCAM1 as Zika virus receptor.</title>
        <authorList>
            <person name="Srivastava M."/>
            <person name="Zhang Y."/>
            <person name="Chen J."/>
            <person name="Sirohi D."/>
            <person name="Miller A."/>
            <person name="Zhang Y."/>
            <person name="Chen Z."/>
            <person name="Lu H."/>
            <person name="Xu J."/>
            <person name="Kuhn R.J."/>
            <person name="Andy Tao W."/>
        </authorList>
    </citation>
    <scope>FUNCTION (ENVELOPE PROTEIN E)</scope>
    <scope>INTERACTION WITH HOST NCAM1 (ENVELOPE PROTEIN E)</scope>
</reference>
<reference key="7">
    <citation type="journal article" date="2021" name="Sci. Rep.">
        <title>A functional interaction between GRP78 and Zika virus E protein.</title>
        <authorList>
            <person name="Khongwichit S."/>
            <person name="Sornjai W."/>
            <person name="Jitobaom K."/>
            <person name="Greenwood M."/>
            <person name="Greenwood M.P."/>
            <person name="Hitakarun A."/>
            <person name="Wikan N."/>
            <person name="Murphy D."/>
            <person name="Smith D.R."/>
        </authorList>
    </citation>
    <scope>FUNCTION (ENVELOPE PROTEIN E)</scope>
    <scope>INTERACTION WITH HOST HSPA5 (ENVELOPE PROTEIN E)</scope>
    <scope>SUBCELLULAR LOCATION (ENVELOPE PROTEIN E)</scope>
</reference>
<reference key="8">
    <citation type="journal article" date="2024" name="Nat. Commun.">
        <title>Zika viruses encode 5' upstream open reading frames affecting infection of human brain cells.</title>
        <authorList>
            <person name="Lefevre C."/>
            <person name="Cook G.M."/>
            <person name="Dinan A.M."/>
            <person name="Torii S."/>
            <person name="Stewart H."/>
            <person name="Gibbons G."/>
            <person name="Nicholson A.S."/>
            <person name="Echavarria-Consuegra L."/>
            <person name="Meredith L.W."/>
            <person name="Lulla V."/>
            <person name="McGovern N."/>
            <person name="Kenyon J.C."/>
            <person name="Goodfellow I."/>
            <person name="Deane J.E."/>
            <person name="Graham S.C."/>
            <person name="Lakatos A."/>
            <person name="Lambrechts L."/>
            <person name="Brierley I."/>
            <person name="Irigoyen N."/>
        </authorList>
    </citation>
    <scope>ALTERNATIVE INITIATION (ISOFORM UROF1 AND UORF2)</scope>
    <source>
        <strain>Isolate PE243</strain>
    </source>
</reference>
<evidence type="ECO:0000250" key="1">
    <source>
        <dbReference type="UniProtKB" id="A0A024B7W1"/>
    </source>
</evidence>
<evidence type="ECO:0000250" key="2">
    <source>
        <dbReference type="UniProtKB" id="P03314"/>
    </source>
</evidence>
<evidence type="ECO:0000250" key="3">
    <source>
        <dbReference type="UniProtKB" id="P06935"/>
    </source>
</evidence>
<evidence type="ECO:0000250" key="4">
    <source>
        <dbReference type="UniProtKB" id="P12823"/>
    </source>
</evidence>
<evidence type="ECO:0000250" key="5">
    <source>
        <dbReference type="UniProtKB" id="P14335"/>
    </source>
</evidence>
<evidence type="ECO:0000250" key="6">
    <source>
        <dbReference type="UniProtKB" id="P14336"/>
    </source>
</evidence>
<evidence type="ECO:0000250" key="7">
    <source>
        <dbReference type="UniProtKB" id="P14340"/>
    </source>
</evidence>
<evidence type="ECO:0000250" key="8">
    <source>
        <dbReference type="UniProtKB" id="P17763"/>
    </source>
</evidence>
<evidence type="ECO:0000250" key="9">
    <source>
        <dbReference type="UniProtKB" id="P29990"/>
    </source>
</evidence>
<evidence type="ECO:0000250" key="10">
    <source>
        <dbReference type="UniProtKB" id="Q32ZE1"/>
    </source>
</evidence>
<evidence type="ECO:0000250" key="11">
    <source>
        <dbReference type="UniProtKB" id="Q6YMS4"/>
    </source>
</evidence>
<evidence type="ECO:0000250" key="12">
    <source>
        <dbReference type="UniProtKB" id="Q9Q6P4"/>
    </source>
</evidence>
<evidence type="ECO:0000255" key="13"/>
<evidence type="ECO:0000255" key="14">
    <source>
        <dbReference type="PROSITE-ProRule" id="PRU00539"/>
    </source>
</evidence>
<evidence type="ECO:0000255" key="15">
    <source>
        <dbReference type="PROSITE-ProRule" id="PRU00541"/>
    </source>
</evidence>
<evidence type="ECO:0000255" key="16">
    <source>
        <dbReference type="PROSITE-ProRule" id="PRU00542"/>
    </source>
</evidence>
<evidence type="ECO:0000255" key="17">
    <source>
        <dbReference type="PROSITE-ProRule" id="PRU00859"/>
    </source>
</evidence>
<evidence type="ECO:0000255" key="18">
    <source>
        <dbReference type="PROSITE-ProRule" id="PRU00860"/>
    </source>
</evidence>
<evidence type="ECO:0000255" key="19">
    <source>
        <dbReference type="PROSITE-ProRule" id="PRU00924"/>
    </source>
</evidence>
<evidence type="ECO:0000269" key="20">
    <source>
    </source>
</evidence>
<evidence type="ECO:0000269" key="21">
    <source>
    </source>
</evidence>
<evidence type="ECO:0000269" key="22">
    <source>
    </source>
</evidence>
<evidence type="ECO:0000269" key="23">
    <source>
    </source>
</evidence>
<evidence type="ECO:0000269" key="24">
    <source>
    </source>
</evidence>
<evidence type="ECO:0000269" key="25">
    <source>
    </source>
</evidence>
<evidence type="ECO:0000305" key="26"/>
<evidence type="ECO:0007829" key="27">
    <source>
        <dbReference type="PDB" id="6UTA"/>
    </source>
</evidence>
<comment type="function">
    <molecule>Capsid protein C</molecule>
    <text evidence="1 8">Plays a role in virus budding by binding to the cell membrane and gathering the viral RNA into a nucleocapsid that forms the core of the mature virus particle. During virus entry, may induce genome penetration into the host cytoplasm after hemifusion induced by the surface proteins. Can migrate to the cell nucleus where it modulates host functions. Inhibits the integrated stress response (ISR) in the infected cell (By similarity).</text>
</comment>
<comment type="function">
    <molecule>Capsid protein C</molecule>
    <text evidence="2">Inhibits RNA silencing by interfering with host Dicer.</text>
</comment>
<comment type="function">
    <molecule>Peptide pr</molecule>
    <text evidence="8">Prevents premature fusion activity of envelope proteins in trans-Golgi by binding to envelope protein E at pH 6.0. After virion release in extracellular space, gets dissociated from E dimers.</text>
</comment>
<comment type="function">
    <molecule>Protein prM</molecule>
    <text evidence="8">Plays a role in host immune defense modulation and protection of envelope protein E during virion synthesis. PrM-E cleavage is inefficient, many virions are only partially matured and immature prM-E proteins could play a role in immune evasion. Contributes to fetal microcephaly in humans. Acts as a chaperone for envelope protein E during intracellular virion assembly by masking and inactivating envelope protein E fusion peptide. prM is the only viral peptide matured by host furin in the trans-Golgi network probably to avoid catastrophic activation of the viral fusion activity in acidic Golgi compartment prior to virion release.</text>
</comment>
<comment type="function">
    <molecule>Small envelope protein M</molecule>
    <text evidence="8">May play a role in virus budding. Exerts cytotoxic effects by activating a mitochondrial apoptotic pathway through M ectodomain. May display a viroporin activity.</text>
</comment>
<comment type="function">
    <molecule>Envelope protein E</molecule>
    <text evidence="8 22 23 24">Binds to host cell surface receptors and mediates fusion between viral and cellular membranes. Efficient virus attachment to cell is, at least in part, mediated by host HAVCR1 in a cell-type specific manner (PubMed:32641828). In addition, host NCAM1 can also be used as entry receptor (PubMed:32753727). Interaction with host HSPA5 plays an important role in the early stages of infection as well (PubMed:33432092). Envelope protein is synthesized in the endoplasmic reticulum and forms a heterodimer with protein prM. The heterodimer plays a role in virion budding in the ER, and the newly formed immature particle is covered with 60 spikes composed of heterodimers between precursor prM and envelope protein E. The virion is transported to the Golgi apparatus where the low pH causes the dissociation of PrM-E heterodimers and formation of E homodimers. PrM-E cleavage is inefficient, many virions are only partially matured and immature prM-E proteins could play a role in immune evasion (By similarity).</text>
</comment>
<comment type="function">
    <molecule>Non-structural protein 1</molecule>
    <text evidence="10">Plays a role in the inhibition of host RLR-induced interferon-beta activation by targeting TANK-binding kinase 1/TBK1. In addition, recruits the host deubiquitinase USP8 to cleave 'Lys-11'-linked polyubiquitin chains from caspase-1/CASP1 thus inhibiting its proteasomal degradation. In turn, stabilized CASP1 promotes cleavage of cGAS, which inhibits its ability to recognize mitochondrial DNA release and initiate type I interferon signaling.</text>
</comment>
<comment type="function">
    <molecule>Non-structural protein 2A</molecule>
    <text evidence="10 21">Component of the viral RNA replication complex that recruits genomic RNA, the structural protein prM/E complex, and the NS2B/NS3 protease complex to the virion assembly site and orchestrates virus morphogenesis (PubMed:31662457). Also antagonizes the host alpha/beta interferon antiviral response (By similarity). May disrupt adherens junction formation and thereby impair proliferation of radial cells in the host cortex (By similarity).</text>
</comment>
<comment type="function">
    <molecule>Serine protease subunit NS2B</molecule>
    <text evidence="10">Required cofactor for the serine protease function of NS3.</text>
</comment>
<comment type="function">
    <molecule>Serine protease NS3</molecule>
    <text evidence="1 10">Displays three enzymatic activities: serine protease, NTPase and RNA helicase. NS3 serine protease, in association with NS2B, performs its autocleavage and cleaves the polyprotein at dibasic sites in the cytoplasm: C-prM, NS2A-NS2B, NS2B-NS3, NS3-NS4A, NS4A-2K and NS4B-NS5. NS3 RNA helicase binds RNA and unwinds dsRNA in the 3' to 5' direction (By similarity). Leads to translation arrest when expressed ex vivo (By similarity). Disrupts host centrosome organization in a CEP63-dependent manner to degrade host TBK1 and inhibits innate immune response (By similarity). Inhibits the integrated stress response (ISR) in the infected cell (By similarity).</text>
</comment>
<comment type="function">
    <molecule>Non-structural protein 4A</molecule>
    <text evidence="1 10 12">Regulates the ATPase activity of the NS3 helicase activity (By similarity). NS4A allows NS3 helicase to conserve energy during unwinding (By similarity). Cooperatively with NS4B suppresses the Akt-mTOR pathway and leads to cellular dysregulation (By similarity). By inhibiting host ANKLE2 functions, may cause defects in brain development, such as microcephaly (By similarity). Also antagonizes the host MDA5-mediated induction of alpha/beta interferon antiviral response (By similarity). Leads to translation arrest when expressed ex vivo (By similarity). Inhibits the integrated stress response (ISR) in the infected cell (By similarity).</text>
</comment>
<comment type="function">
    <molecule>Peptide 2k</molecule>
    <text evidence="8">Functions as a signal peptide for NS4B and is required for the interferon antagonism activity of the latter.</text>
</comment>
<comment type="function">
    <molecule>Non-structural protein 4B</molecule>
    <text evidence="10 12">Induces the formation of ER-derived membrane vesicles where the viral replication takes place (By similarity). Also plays a role in the inhibition of host RLR-induced interferon-beta production at TANK-binding kinase 1/TBK1 level (By similarity). Cooperatively with NS4A suppresses the Akt-mTOR pathway and leads to cellular dysregulation (By similarity).</text>
</comment>
<comment type="function">
    <molecule>RNA-directed RNA polymerase NS5</molecule>
    <text evidence="1 10">Replicates the viral (+) and (-) RNA genome, and performs the capping of genomes in the cytoplasm (By similarity). Methylates viral RNA cap at guanine N-7 and ribose 2'-O positions. Once sufficient NS5 is expressed, binds to the cap-proximal structure and inhibits further translation of the viral genome (By similarity). Besides its role in RNA genome replication, also prevents the establishment of a cellular antiviral state by blocking the interferon-alpha/beta (IFN-alpha/beta) signaling pathway. Mechanistically, interferes with host kinases TBK1 and IKKE upstream of interferon regulatory factor 3/IRF3 to inhibit the RIG-I pathway (By similarity). Also antagonizes type I interferon signaling by targeting STAT2 for degradation by the proteasome thereby preventing activation of JAK-STAT signaling pathway (By similarity). Mechanistically, acts as a scaffold protein to connect host ZSWIM8/CUL3 ligase complex and STAT2, leading to STAT2 degradation. Within the host nucleus, disrupts host SUMO1 and STAT2 co-localization with PML, resulting in PML degradation (By similarity). May also reduce immune responses by preventing the recruitment of the host PAF1 complex to interferon-responsive genes (By similarity).</text>
</comment>
<comment type="catalytic activity">
    <molecule>RNA-directed RNA polymerase NS5</molecule>
    <reaction evidence="19">
        <text>a 5'-end (5'-triphosphoguanosine)-ribonucleoside in mRNA + S-adenosyl-L-methionine = a 5'-end (N(7)-methyl 5'-triphosphoguanosine)-ribonucleoside in mRNA + S-adenosyl-L-homocysteine</text>
        <dbReference type="Rhea" id="RHEA:67008"/>
        <dbReference type="Rhea" id="RHEA-COMP:17166"/>
        <dbReference type="Rhea" id="RHEA-COMP:17167"/>
        <dbReference type="ChEBI" id="CHEBI:57856"/>
        <dbReference type="ChEBI" id="CHEBI:59789"/>
        <dbReference type="ChEBI" id="CHEBI:156461"/>
        <dbReference type="ChEBI" id="CHEBI:167617"/>
        <dbReference type="EC" id="2.1.1.56"/>
    </reaction>
</comment>
<comment type="catalytic activity">
    <molecule>RNA-directed RNA polymerase NS5</molecule>
    <reaction evidence="19">
        <text>a 5'-end (N(7)-methyl 5'-triphosphoguanosine)-ribonucleoside in mRNA + S-adenosyl-L-methionine = a 5'-end (N(7)-methyl 5'-triphosphoguanosine)-(2'-O-methyl-ribonucleoside) in mRNA + S-adenosyl-L-homocysteine + H(+)</text>
        <dbReference type="Rhea" id="RHEA:67020"/>
        <dbReference type="Rhea" id="RHEA-COMP:17167"/>
        <dbReference type="Rhea" id="RHEA-COMP:17168"/>
        <dbReference type="ChEBI" id="CHEBI:15378"/>
        <dbReference type="ChEBI" id="CHEBI:57856"/>
        <dbReference type="ChEBI" id="CHEBI:59789"/>
        <dbReference type="ChEBI" id="CHEBI:156461"/>
        <dbReference type="ChEBI" id="CHEBI:167609"/>
        <dbReference type="EC" id="2.1.1.57"/>
    </reaction>
</comment>
<comment type="catalytic activity">
    <reaction evidence="14">
        <text>RNA(n) + a ribonucleoside 5'-triphosphate = RNA(n+1) + diphosphate</text>
        <dbReference type="Rhea" id="RHEA:21248"/>
        <dbReference type="Rhea" id="RHEA-COMP:14527"/>
        <dbReference type="Rhea" id="RHEA-COMP:17342"/>
        <dbReference type="ChEBI" id="CHEBI:33019"/>
        <dbReference type="ChEBI" id="CHEBI:61557"/>
        <dbReference type="ChEBI" id="CHEBI:140395"/>
        <dbReference type="EC" id="2.7.7.48"/>
    </reaction>
</comment>
<comment type="catalytic activity">
    <reaction evidence="10">
        <text>Selective hydrolysis of -Xaa-Xaa-|-Yaa- bonds in which each of the Xaa can be either Arg or Lys and Yaa can be either Ser or Ala.</text>
        <dbReference type="EC" id="3.4.21.91"/>
    </reaction>
</comment>
<comment type="catalytic activity">
    <reaction evidence="10">
        <text>a ribonucleoside 5'-triphosphate + H2O = a ribonucleoside 5'-diphosphate + phosphate + H(+)</text>
        <dbReference type="Rhea" id="RHEA:23680"/>
        <dbReference type="ChEBI" id="CHEBI:15377"/>
        <dbReference type="ChEBI" id="CHEBI:15378"/>
        <dbReference type="ChEBI" id="CHEBI:43474"/>
        <dbReference type="ChEBI" id="CHEBI:57930"/>
        <dbReference type="ChEBI" id="CHEBI:61557"/>
        <dbReference type="EC" id="3.6.1.15"/>
    </reaction>
</comment>
<comment type="catalytic activity">
    <reaction evidence="12">
        <text>ATP + H2O = ADP + phosphate + H(+)</text>
        <dbReference type="Rhea" id="RHEA:13065"/>
        <dbReference type="ChEBI" id="CHEBI:15377"/>
        <dbReference type="ChEBI" id="CHEBI:15378"/>
        <dbReference type="ChEBI" id="CHEBI:30616"/>
        <dbReference type="ChEBI" id="CHEBI:43474"/>
        <dbReference type="ChEBI" id="CHEBI:456216"/>
        <dbReference type="EC" id="3.6.4.13"/>
    </reaction>
</comment>
<comment type="subunit">
    <molecule>Capsid protein C</molecule>
    <text evidence="1 8">Homodimer (By similarity). Interacts with host SERTAD3; this interaction promotes capsid protein C degradation. Interacts with host CAPRIN1; this interaction is probably linked to the inhibition of stress granules formation by the virus (By similarity). Interacts with host G3BP1; this interaction is probably linked to the inhibition of stress granules formation by the virus (By similarity).</text>
</comment>
<comment type="subunit">
    <molecule>Protein prM</molecule>
    <text evidence="8 21">Forms heterodimers with envelope protein E in the endoplasmic reticulum and Golgi (By similarity). Interacts with non-structural protein 2A.</text>
</comment>
<comment type="subunit">
    <molecule>Envelope protein E</molecule>
    <text evidence="1 8 10 21 22 23 24">Homodimer; in the endoplasmic reticulum and Golgi (By similarity). Interacts with host TYRO3, AXL and DC-SIGN proteins (By similarity). Interacts with non-structural protein 2A (PubMed:31662457). Interacts with host HAVCR1; this interaction likely mediates virus attachment to host cell (PubMed:32641828). Interacts with host NCAM1 (PubMed:32753727). Interacts with host HSPA5 (PubMed:33432092). Interacts with Aedes aegypti SRPN25, APY and venom allergen-1 salivary proteins; the interactions do not affect Zika virus replication in human endothelial cells and keratinocytes (By similarity).</text>
</comment>
<comment type="subunit">
    <molecule>Non-structural protein 1</molecule>
    <text evidence="8 10">Homodimer; Homohexamer when secreted (By similarity). Interacts with host TBK1 (By similarity). Interacts with host USP8 (By similarity). Interacts with envelope protein E (By similarity).</text>
</comment>
<comment type="subunit">
    <molecule>Non-structural protein 2A</molecule>
    <text evidence="21">Interacts with the structural protein prM/E complex, and the NS2B/NS3 protease complex.</text>
</comment>
<comment type="subunit">
    <molecule>Serine protease subunit NS2B</molecule>
    <text evidence="8 10 21">Forms a heterodimer with serine protease NS3 (By similarity). May form homooligomers (By similarity). Interacts with human SPCS1 (By similarity). Interacts with non-structural protein 2A (PubMed:31662457).</text>
</comment>
<comment type="subunit">
    <molecule>Serine protease NS3</molecule>
    <text evidence="1 8 10 21">Forms a heterodimer with NS2B (By similarity). Interacts with NS4B (By similarity). Interacts with unphosphorylated RNA-directed RNA polymerase NS5; this interaction stimulates RNA-directed RNA polymerase NS5 guanylyltransferase activity (By similarity). Interacts with non-structural protein 2A (PubMed:31662457). Interacts with host SHFL; this interaction promotes NS3 degradation via a lysosome-dependent pathway (By similarity). Interacts with host CEP63; this interaction disorganizes the centrosome and inhibits host innate immune response (By similarity).</text>
</comment>
<comment type="subunit">
    <molecule>Non-structural protein 4A</molecule>
    <text evidence="1">May interact with host ANKLE2; the interaction may cause defects in brain development, such as microcephaly (By similarity). May interact with host SRPRA and SEC61G (By similarity).</text>
</comment>
<comment type="subunit">
    <molecule>Non-structural protein 4B</molecule>
    <text evidence="8">Interacts with serine protease NS3 (By similarity). Interacts with NS1 (By similarity).</text>
</comment>
<comment type="subunit">
    <molecule>RNA-directed RNA polymerase NS5</molecule>
    <text evidence="1 8 10">Homodimer (By similarity). Interacts with host STAT2; this interaction inhibits the phosphorylation of the latter, and, when all viral proteins are present (polyprotein), targets STAT2 for degradation (By similarity). Interacts with host TBK1 and IKBKE; these interactions lead to the inhibition of the host RIG-I signaling pathway (By similarity). Interacts with host PAF1 complex; the interaction may prevent the recruitment of the host PAF1 complex to interferon-responsive genes, and thus reduces the immune response (By similarity). Interacts with serine protease NS3 (By similarity). Interacts with host KPNA2 (By similarity). Interacts with host ZSWIM8; this interaction allows STAT2 binding to ZSWIM8 and subsequent proteasomal degradation leading to inhibition of interferon signaling (By similarity).</text>
</comment>
<comment type="interaction">
    <interactant intactId="EBI-20625235">
        <id>A0A142I5B9</id>
    </interactant>
    <interactant intactId="EBI-946825">
        <id>Q8N111</id>
        <label>CEND1</label>
    </interactant>
    <organismsDiffer>true</organismsDiffer>
    <experiments>3</experiments>
</comment>
<comment type="interaction">
    <interactant intactId="EBI-20625235">
        <id>A0A142I5B9</id>
    </interactant>
    <interactant intactId="EBI-722721">
        <id>Q99653</id>
        <label>CHP1</label>
    </interactant>
    <organismsDiffer>true</organismsDiffer>
    <experiments>2</experiments>
</comment>
<comment type="interaction">
    <interactant intactId="EBI-20625235">
        <id>A0A142I5B9</id>
    </interactant>
    <interactant intactId="EBI-6165897">
        <id>Q9NWW5</id>
        <label>CLN6</label>
    </interactant>
    <organismsDiffer>true</organismsDiffer>
    <experiments>4</experiments>
</comment>
<comment type="interaction">
    <interactant intactId="EBI-20625235">
        <id>A0A142I5B9</id>
    </interactant>
    <interactant intactId="EBI-2371923">
        <id>Q4G0J3</id>
        <label>LARP7</label>
    </interactant>
    <organismsDiffer>true</organismsDiffer>
    <experiments>2</experiments>
</comment>
<comment type="interaction">
    <interactant intactId="EBI-20625235">
        <id>A0A142I5B9</id>
    </interactant>
    <interactant intactId="EBI-713507">
        <id>Q9NX58</id>
        <label>LYAR</label>
    </interactant>
    <organismsDiffer>true</organismsDiffer>
    <experiments>2</experiments>
</comment>
<comment type="interaction">
    <interactant intactId="EBI-20625235">
        <id>A0A142I5B9</id>
    </interactant>
    <interactant intactId="EBI-9995414">
        <id>Q8NEJ9</id>
        <label>NGDN</label>
    </interactant>
    <organismsDiffer>true</organismsDiffer>
    <experiments>2</experiments>
</comment>
<comment type="interaction">
    <interactant intactId="EBI-20625235">
        <id>A0A142I5B9</id>
    </interactant>
    <interactant intactId="EBI-10987522">
        <id>O43251-6</id>
        <label>RBFOX2</label>
    </interactant>
    <organismsDiffer>true</organismsDiffer>
    <experiments>3</experiments>
</comment>
<comment type="interaction">
    <interactant intactId="EBI-20625235">
        <id>A0A142I5B9</id>
    </interactant>
    <interactant intactId="EBI-2684237">
        <id>O00767</id>
        <label>SCD</label>
    </interactant>
    <organismsDiffer>true</organismsDiffer>
    <experiments>3</experiments>
</comment>
<comment type="interaction">
    <interactant intactId="EBI-20625235">
        <id>A0A142I5B9</id>
    </interactant>
    <interactant intactId="EBI-395421">
        <id>Q16637</id>
        <label>SMN2</label>
    </interactant>
    <organismsDiffer>true</organismsDiffer>
    <experiments>2</experiments>
</comment>
<comment type="interaction">
    <interactant intactId="EBI-20625235">
        <id>A0A142I5B9</id>
    </interactant>
    <interactant intactId="EBI-1055840">
        <id>Q5BJD5</id>
        <label>TMEM41B</label>
    </interactant>
    <organismsDiffer>true</organismsDiffer>
    <experiments>3</experiments>
</comment>
<comment type="subcellular location">
    <molecule>Capsid protein C</molecule>
    <subcellularLocation>
        <location evidence="8">Virion</location>
    </subcellularLocation>
    <subcellularLocation>
        <location evidence="8">Host nucleus</location>
    </subcellularLocation>
    <subcellularLocation>
        <location evidence="3">Host cytoplasm</location>
    </subcellularLocation>
    <subcellularLocation>
        <location evidence="3">Host cytoplasm</location>
        <location evidence="3">Host perinuclear region</location>
    </subcellularLocation>
</comment>
<comment type="subcellular location">
    <molecule>Peptide pr</molecule>
    <subcellularLocation>
        <location evidence="8">Secreted</location>
    </subcellularLocation>
</comment>
<comment type="subcellular location">
    <molecule>Small envelope protein M</molecule>
    <subcellularLocation>
        <location evidence="8">Virion membrane</location>
        <topology evidence="13">Multi-pass membrane protein</topology>
    </subcellularLocation>
    <subcellularLocation>
        <location evidence="8">Host endoplasmic reticulum membrane</location>
        <topology evidence="13">Multi-pass membrane protein</topology>
    </subcellularLocation>
</comment>
<comment type="subcellular location">
    <molecule>Envelope protein E</molecule>
    <subcellularLocation>
        <location evidence="8">Virion membrane</location>
        <topology evidence="13">Multi-pass membrane protein</topology>
    </subcellularLocation>
    <subcellularLocation>
        <location evidence="8">Host endoplasmic reticulum membrane</location>
        <topology evidence="13">Multi-pass membrane protein</topology>
    </subcellularLocation>
    <subcellularLocation>
        <location evidence="24">Host cell surface</location>
    </subcellularLocation>
</comment>
<comment type="subcellular location">
    <molecule>Non-structural protein 1</molecule>
    <subcellularLocation>
        <location evidence="8">Secreted</location>
    </subcellularLocation>
    <subcellularLocation>
        <location evidence="10">Host endoplasmic reticulum membrane</location>
        <topology evidence="10">Peripheral membrane protein</topology>
        <orientation evidence="8">Lumenal side</orientation>
    </subcellularLocation>
    <text evidence="12">Located in RE-derived vesicles hosting the replication complex.</text>
</comment>
<comment type="subcellular location">
    <molecule>Non-structural protein 2A</molecule>
    <subcellularLocation>
        <location evidence="8">Host endoplasmic reticulum membrane</location>
        <topology evidence="8">Multi-pass membrane protein</topology>
    </subcellularLocation>
</comment>
<comment type="subcellular location">
    <molecule>Serine protease NS3</molecule>
    <subcellularLocation>
        <location evidence="18">Host endoplasmic reticulum membrane</location>
        <topology evidence="18">Peripheral membrane protein</topology>
        <orientation evidence="18">Cytoplasmic side</orientation>
    </subcellularLocation>
    <text evidence="18">Remains non-covalently associated to serine protease subunit NS2B.</text>
</comment>
<comment type="subcellular location">
    <molecule>Non-structural protein 4A</molecule>
    <subcellularLocation>
        <location evidence="8">Host endoplasmic reticulum membrane</location>
        <topology evidence="8">Multi-pass membrane protein</topology>
    </subcellularLocation>
    <text evidence="8">Located in RE-associated vesicles hosting the replication complex.</text>
</comment>
<comment type="subcellular location">
    <molecule>Non-structural protein 4B</molecule>
    <subcellularLocation>
        <location evidence="8">Host endoplasmic reticulum membrane</location>
        <topology evidence="8">Multi-pass membrane protein</topology>
    </subcellularLocation>
    <text evidence="12">Located in RE-derived vesicles hosting the replication complex.</text>
</comment>
<comment type="subcellular location">
    <molecule>RNA-directed RNA polymerase NS5</molecule>
    <subcellularLocation>
        <location evidence="10">Host endoplasmic reticulum membrane</location>
        <topology evidence="10">Peripheral membrane protein</topology>
        <orientation evidence="10">Cytoplasmic side</orientation>
    </subcellularLocation>
    <subcellularLocation>
        <location evidence="8">Host nucleus</location>
    </subcellularLocation>
    <text evidence="8">Located in RE-associated vesicles hosting the replication complex. NS5 protein is mainly localized in the nucleus rather than in ER vesicles.</text>
</comment>
<comment type="alternative products">
    <event type="alternative initiation"/>
    <isoform>
        <id>A0A142I5B9-1</id>
        <name>Genome polyprotein</name>
        <sequence type="displayed"/>
    </isoform>
    <isoform>
        <id>P0DXO3-1</id>
        <name evidence="25">uORF1 protein</name>
        <sequence type="external"/>
    </isoform>
    <isoform>
        <id>P0DXO1-1</id>
        <name evidence="25">uORF2 protein</name>
        <sequence type="external"/>
    </isoform>
</comment>
<comment type="domain">
    <molecule>Small envelope protein M</molecule>
    <text evidence="8">The transmembrane domain contains an endoplasmic reticulum retention signal.</text>
</comment>
<comment type="domain">
    <molecule>Envelope protein E</molecule>
    <text evidence="8">The transmembrane domain contains an endoplasmic reticulum retention signal.</text>
</comment>
<comment type="domain">
    <molecule>Capsid protein C</molecule>
    <text evidence="4">The disordered region at the N-terminus may be involved in lipid-droplet binding.</text>
</comment>
<comment type="domain">
    <molecule>Serine protease subunit NS2B</molecule>
    <text evidence="1">The central disordered region transitions to ordered by binding to NS3.</text>
</comment>
<comment type="domain">
    <molecule>RNA-directed RNA polymerase NS5</molecule>
    <text evidence="10">Comprises a methyltransferase (MTase) in the N-terminal region and an RNA-dependent RNA polymerase in the C-terminal region.</text>
</comment>
<comment type="PTM">
    <molecule>Genome polyprotein</molecule>
    <text evidence="8">Specific enzymatic cleavages in vivo yield mature proteins. Cleavages in the lumen of endoplasmic reticulum are performed by host signal peptidase, whereas cleavages in the cytoplasmic side are performed by serine protease NS3. Signal cleavage at the 2K-4B site requires a prior NS3 protease-mediated cleavage at the 4A-2K site.</text>
</comment>
<comment type="PTM">
    <molecule>Protein prM</molecule>
    <text evidence="8">Cleaved in post-Golgi vesicles by a host furin, releasing the mature small envelope protein M, and peptide pr. This cleavage is incomplete as up to 30% of viral particles still carry uncleaved prM.</text>
</comment>
<comment type="PTM">
    <molecule>Envelope protein E</molecule>
    <text evidence="1">N-glycosylation plays a role in virulence in mammalian and mosquito hosts, but may have no effect on neurovirulence.</text>
</comment>
<comment type="PTM">
    <molecule>Envelope protein E</molecule>
    <text evidence="22">Ubiquitination by host TRIM7 promotes virus attachment and fusion of the virus and the host endosome membrane.</text>
</comment>
<comment type="PTM">
    <molecule>Non-structural protein 1</molecule>
    <text evidence="8">N-glycosylated. The excreted form is glycosylated, which is required for efficient secretion of the protein from infected cells.</text>
</comment>
<comment type="PTM">
    <molecule>Non-structural protein 1</molecule>
    <text evidence="1">Ubiquitination by host TRIM22 leads to proteasomal degradation.</text>
</comment>
<comment type="PTM">
    <molecule>Serine protease NS3</molecule>
    <text evidence="1">Ubiquitination by host TRIM22 leads to proteasomal degradation.</text>
</comment>
<comment type="PTM">
    <molecule>Serine protease NS3</molecule>
    <text evidence="10">Acetylated by host KAT5. Acetylation modulates NS3 RNA-binding and unwinding activities and plays an important positive role for viral replication.</text>
</comment>
<comment type="PTM">
    <molecule>RNA-directed RNA polymerase NS5</molecule>
    <text evidence="8">Phosphorylated on serines residues. This phosphorylation may trigger NS5 nuclear localization.</text>
</comment>
<comment type="PTM">
    <molecule>RNA-directed RNA polymerase NS5</molecule>
    <text evidence="1">Sumoylated, required for regulating IFN induced interferon stimulated genes/ISGs.</text>
</comment>
<comment type="miscellaneous">
    <text evidence="26">Belongs to the Zika virus American lineage encoding for a two uORF.</text>
</comment>
<comment type="similarity">
    <text evidence="19">In the N-terminal section; belongs to the class I-like SAM-binding methyltransferase superfamily. mRNA cap 0-1 NS5-type methyltransferase family.</text>
</comment>
<dbReference type="EC" id="3.4.21.91"/>
<dbReference type="EC" id="3.6.1.15"/>
<dbReference type="EC" id="3.6.4.13"/>
<dbReference type="EC" id="2.1.1.56"/>
<dbReference type="EC" id="2.1.1.57"/>
<dbReference type="EC" id="2.7.7.48"/>
<dbReference type="EMBL" id="JN860885">
    <property type="protein sequence ID" value="AFD30972.1"/>
    <property type="molecule type" value="Genomic_RNA"/>
</dbReference>
<dbReference type="EMBL" id="KU955593">
    <property type="protein sequence ID" value="AMR39834.1"/>
    <property type="molecule type" value="Genomic_RNA"/>
</dbReference>
<dbReference type="PDB" id="6UTA">
    <property type="method" value="X-ray"/>
    <property type="resolution" value="3.10 A"/>
    <property type="chains" value="C/E=588-697"/>
</dbReference>
<dbReference type="PDB" id="7BPK">
    <property type="method" value="X-ray"/>
    <property type="resolution" value="3.10 A"/>
    <property type="chains" value="A/B=291-699"/>
</dbReference>
<dbReference type="PDB" id="7BQ5">
    <property type="method" value="X-ray"/>
    <property type="resolution" value="2.99 A"/>
    <property type="chains" value="A/B=291-699"/>
</dbReference>
<dbReference type="PDBsum" id="6UTA"/>
<dbReference type="PDBsum" id="7BPK"/>
<dbReference type="PDBsum" id="7BQ5"/>
<dbReference type="EMDB" id="EMD-8508"/>
<dbReference type="SMR" id="A0A142I5B9"/>
<dbReference type="IntAct" id="A0A142I5B9">
    <property type="interactions" value="385"/>
</dbReference>
<dbReference type="iPTMnet" id="A0A142I5B9"/>
<dbReference type="Proteomes" id="UP000157401">
    <property type="component" value="Genome"/>
</dbReference>
<dbReference type="GO" id="GO:0005576">
    <property type="term" value="C:extracellular region"/>
    <property type="evidence" value="ECO:0007669"/>
    <property type="project" value="UniProtKB-SubCell"/>
</dbReference>
<dbReference type="GO" id="GO:0044167">
    <property type="term" value="C:host cell endoplasmic reticulum membrane"/>
    <property type="evidence" value="ECO:0007669"/>
    <property type="project" value="UniProtKB-SubCell"/>
</dbReference>
<dbReference type="GO" id="GO:0042025">
    <property type="term" value="C:host cell nucleus"/>
    <property type="evidence" value="ECO:0007669"/>
    <property type="project" value="UniProtKB-SubCell"/>
</dbReference>
<dbReference type="GO" id="GO:0044220">
    <property type="term" value="C:host cell perinuclear region of cytoplasm"/>
    <property type="evidence" value="ECO:0007669"/>
    <property type="project" value="UniProtKB-SubCell"/>
</dbReference>
<dbReference type="GO" id="GO:0044228">
    <property type="term" value="C:host cell surface"/>
    <property type="evidence" value="ECO:0007669"/>
    <property type="project" value="UniProtKB-SubCell"/>
</dbReference>
<dbReference type="GO" id="GO:0016020">
    <property type="term" value="C:membrane"/>
    <property type="evidence" value="ECO:0007669"/>
    <property type="project" value="UniProtKB-KW"/>
</dbReference>
<dbReference type="GO" id="GO:0019028">
    <property type="term" value="C:viral capsid"/>
    <property type="evidence" value="ECO:0007669"/>
    <property type="project" value="UniProtKB-KW"/>
</dbReference>
<dbReference type="GO" id="GO:0055036">
    <property type="term" value="C:virion membrane"/>
    <property type="evidence" value="ECO:0007669"/>
    <property type="project" value="UniProtKB-SubCell"/>
</dbReference>
<dbReference type="GO" id="GO:0005524">
    <property type="term" value="F:ATP binding"/>
    <property type="evidence" value="ECO:0007669"/>
    <property type="project" value="UniProtKB-KW"/>
</dbReference>
<dbReference type="GO" id="GO:0016887">
    <property type="term" value="F:ATP hydrolysis activity"/>
    <property type="evidence" value="ECO:0007669"/>
    <property type="project" value="RHEA"/>
</dbReference>
<dbReference type="GO" id="GO:0003725">
    <property type="term" value="F:double-stranded RNA binding"/>
    <property type="evidence" value="ECO:0007669"/>
    <property type="project" value="InterPro"/>
</dbReference>
<dbReference type="GO" id="GO:0005525">
    <property type="term" value="F:GTP binding"/>
    <property type="evidence" value="ECO:0007669"/>
    <property type="project" value="UniProtKB-KW"/>
</dbReference>
<dbReference type="GO" id="GO:0046872">
    <property type="term" value="F:metal ion binding"/>
    <property type="evidence" value="ECO:0007669"/>
    <property type="project" value="UniProtKB-KW"/>
</dbReference>
<dbReference type="GO" id="GO:0004483">
    <property type="term" value="F:mRNA (nucleoside-2'-O-)-methyltransferase activity"/>
    <property type="evidence" value="ECO:0007669"/>
    <property type="project" value="UniProtKB-EC"/>
</dbReference>
<dbReference type="GO" id="GO:0004482">
    <property type="term" value="F:mRNA 5'-cap (guanine-N7-)-methyltransferase activity"/>
    <property type="evidence" value="ECO:0007669"/>
    <property type="project" value="UniProtKB-EC"/>
</dbReference>
<dbReference type="GO" id="GO:0046983">
    <property type="term" value="F:protein dimerization activity"/>
    <property type="evidence" value="ECO:0007669"/>
    <property type="project" value="InterPro"/>
</dbReference>
<dbReference type="GO" id="GO:0003724">
    <property type="term" value="F:RNA helicase activity"/>
    <property type="evidence" value="ECO:0007669"/>
    <property type="project" value="UniProtKB-EC"/>
</dbReference>
<dbReference type="GO" id="GO:0003968">
    <property type="term" value="F:RNA-directed RNA polymerase activity"/>
    <property type="evidence" value="ECO:0007669"/>
    <property type="project" value="UniProtKB-KW"/>
</dbReference>
<dbReference type="GO" id="GO:0004252">
    <property type="term" value="F:serine-type endopeptidase activity"/>
    <property type="evidence" value="ECO:0007669"/>
    <property type="project" value="InterPro"/>
</dbReference>
<dbReference type="GO" id="GO:0005198">
    <property type="term" value="F:structural molecule activity"/>
    <property type="evidence" value="ECO:0007669"/>
    <property type="project" value="InterPro"/>
</dbReference>
<dbReference type="GO" id="GO:0039654">
    <property type="term" value="P:fusion of virus membrane with host endosome membrane"/>
    <property type="evidence" value="ECO:0007669"/>
    <property type="project" value="UniProtKB-KW"/>
</dbReference>
<dbReference type="GO" id="GO:0006508">
    <property type="term" value="P:proteolysis"/>
    <property type="evidence" value="ECO:0007669"/>
    <property type="project" value="UniProtKB-KW"/>
</dbReference>
<dbReference type="GO" id="GO:0046718">
    <property type="term" value="P:symbiont entry into host cell"/>
    <property type="evidence" value="ECO:0007669"/>
    <property type="project" value="UniProtKB-KW"/>
</dbReference>
<dbReference type="GO" id="GO:0039520">
    <property type="term" value="P:symbiont-mediated activation of host autophagy"/>
    <property type="evidence" value="ECO:0007669"/>
    <property type="project" value="UniProtKB-KW"/>
</dbReference>
<dbReference type="GO" id="GO:0052170">
    <property type="term" value="P:symbiont-mediated suppression of host innate immune response"/>
    <property type="evidence" value="ECO:0007669"/>
    <property type="project" value="UniProtKB-KW"/>
</dbReference>
<dbReference type="GO" id="GO:0039564">
    <property type="term" value="P:symbiont-mediated suppression of host JAK-STAT cascade via inhibition of STAT2 activity"/>
    <property type="evidence" value="ECO:0007669"/>
    <property type="project" value="UniProtKB-KW"/>
</dbReference>
<dbReference type="GO" id="GO:0039502">
    <property type="term" value="P:symbiont-mediated suppression of host type I interferon-mediated signaling pathway"/>
    <property type="evidence" value="ECO:0007669"/>
    <property type="project" value="UniProtKB-KW"/>
</dbReference>
<dbReference type="GO" id="GO:0039694">
    <property type="term" value="P:viral RNA genome replication"/>
    <property type="evidence" value="ECO:0007669"/>
    <property type="project" value="InterPro"/>
</dbReference>
<dbReference type="GO" id="GO:0019062">
    <property type="term" value="P:virion attachment to host cell"/>
    <property type="evidence" value="ECO:0007669"/>
    <property type="project" value="UniProtKB-KW"/>
</dbReference>
<dbReference type="CDD" id="cd20761">
    <property type="entry name" value="capping_2-OMTase_Flaviviridae"/>
    <property type="match status" value="1"/>
</dbReference>
<dbReference type="CDD" id="cd17931">
    <property type="entry name" value="DEXHc_viral_Ns3"/>
    <property type="match status" value="1"/>
</dbReference>
<dbReference type="CDD" id="cd12149">
    <property type="entry name" value="Flavi_E_C"/>
    <property type="match status" value="1"/>
</dbReference>
<dbReference type="CDD" id="cd17038">
    <property type="entry name" value="Flavi_M"/>
    <property type="match status" value="1"/>
</dbReference>
<dbReference type="CDD" id="cd23204">
    <property type="entry name" value="Flavivirus_RdRp"/>
    <property type="match status" value="1"/>
</dbReference>
<dbReference type="CDD" id="cd18806">
    <property type="entry name" value="SF2_C_viral"/>
    <property type="match status" value="1"/>
</dbReference>
<dbReference type="FunFam" id="1.20.1280.260:FF:000001">
    <property type="entry name" value="Envelope glycoprotein"/>
    <property type="match status" value="1"/>
</dbReference>
<dbReference type="FunFam" id="2.60.40.350:FF:000001">
    <property type="entry name" value="Envelope glycoprotein"/>
    <property type="match status" value="1"/>
</dbReference>
<dbReference type="FunFam" id="1.10.10.930:FF:000001">
    <property type="entry name" value="Genome polyprotein"/>
    <property type="match status" value="1"/>
</dbReference>
<dbReference type="FunFam" id="1.10.260.90:FF:000001">
    <property type="entry name" value="Genome polyprotein"/>
    <property type="match status" value="1"/>
</dbReference>
<dbReference type="FunFam" id="1.10.8.970:FF:000001">
    <property type="entry name" value="Genome polyprotein"/>
    <property type="match status" value="1"/>
</dbReference>
<dbReference type="FunFam" id="2.40.10.120:FF:000005">
    <property type="entry name" value="Genome polyprotein"/>
    <property type="match status" value="1"/>
</dbReference>
<dbReference type="FunFam" id="2.40.10.120:FF:000006">
    <property type="entry name" value="Genome polyprotein"/>
    <property type="match status" value="1"/>
</dbReference>
<dbReference type="FunFam" id="2.60.260.50:FF:000001">
    <property type="entry name" value="Genome polyprotein"/>
    <property type="match status" value="1"/>
</dbReference>
<dbReference type="FunFam" id="3.30.70.2840:FF:000001">
    <property type="entry name" value="Genome polyprotein"/>
    <property type="match status" value="1"/>
</dbReference>
<dbReference type="FunFam" id="3.30.70.2840:FF:000002">
    <property type="entry name" value="Genome polyprotein"/>
    <property type="match status" value="1"/>
</dbReference>
<dbReference type="FunFam" id="3.30.70.2840:FF:000004">
    <property type="entry name" value="Genome polyprotein"/>
    <property type="match status" value="1"/>
</dbReference>
<dbReference type="FunFam" id="3.40.50.150:FF:000105">
    <property type="entry name" value="Genome polyprotein"/>
    <property type="match status" value="1"/>
</dbReference>
<dbReference type="FunFam" id="3.40.50.300:FF:000763">
    <property type="entry name" value="Genome polyprotein"/>
    <property type="match status" value="1"/>
</dbReference>
<dbReference type="Gene3D" id="1.10.10.930">
    <property type="match status" value="1"/>
</dbReference>
<dbReference type="Gene3D" id="1.10.260.90">
    <property type="match status" value="1"/>
</dbReference>
<dbReference type="Gene3D" id="1.20.1280.260">
    <property type="match status" value="1"/>
</dbReference>
<dbReference type="Gene3D" id="2.40.10.120">
    <property type="match status" value="2"/>
</dbReference>
<dbReference type="Gene3D" id="2.60.40.350">
    <property type="match status" value="1"/>
</dbReference>
<dbReference type="Gene3D" id="1.10.8.970">
    <property type="entry name" value="Flavivirus envelope glycoprotein M-like"/>
    <property type="match status" value="1"/>
</dbReference>
<dbReference type="Gene3D" id="2.60.260.50">
    <property type="entry name" value="Flavivirus polyprotein propeptide domain"/>
    <property type="match status" value="1"/>
</dbReference>
<dbReference type="Gene3D" id="3.30.70.2840">
    <property type="entry name" value="Flavivirus RNA-directed RNA polymerase, thumb domain"/>
    <property type="match status" value="3"/>
</dbReference>
<dbReference type="Gene3D" id="3.40.50.300">
    <property type="entry name" value="P-loop containing nucleotide triphosphate hydrolases"/>
    <property type="match status" value="2"/>
</dbReference>
<dbReference type="Gene3D" id="2.60.98.10">
    <property type="entry name" value="Tick-borne Encephalitis virus Glycoprotein, domain 1"/>
    <property type="match status" value="1"/>
</dbReference>
<dbReference type="Gene3D" id="3.40.50.150">
    <property type="entry name" value="Vaccinia Virus protein VP39"/>
    <property type="match status" value="1"/>
</dbReference>
<dbReference type="Gene3D" id="3.30.67.10">
    <property type="entry name" value="Viral Envelope Glycoprotein, domain 2"/>
    <property type="match status" value="1"/>
</dbReference>
<dbReference type="Gene3D" id="3.30.387.10">
    <property type="entry name" value="Viral Envelope Glycoprotein, domain 3"/>
    <property type="match status" value="1"/>
</dbReference>
<dbReference type="InterPro" id="IPR043502">
    <property type="entry name" value="DNA/RNA_pol_sf"/>
</dbReference>
<dbReference type="InterPro" id="IPR000069">
    <property type="entry name" value="Env_glycoprot_M_flavivir"/>
</dbReference>
<dbReference type="InterPro" id="IPR038302">
    <property type="entry name" value="Env_glycoprot_M_sf_flavivir"/>
</dbReference>
<dbReference type="InterPro" id="IPR013755">
    <property type="entry name" value="Flav_gly_cen_dom_subdom1"/>
</dbReference>
<dbReference type="InterPro" id="IPR001122">
    <property type="entry name" value="Flavi_capsidC"/>
</dbReference>
<dbReference type="InterPro" id="IPR037172">
    <property type="entry name" value="Flavi_capsidC_sf"/>
</dbReference>
<dbReference type="InterPro" id="IPR011492">
    <property type="entry name" value="Flavi_DEAD"/>
</dbReference>
<dbReference type="InterPro" id="IPR027287">
    <property type="entry name" value="Flavi_E_Ig-like"/>
</dbReference>
<dbReference type="InterPro" id="IPR026470">
    <property type="entry name" value="Flavi_E_Stem/Anchor_dom"/>
</dbReference>
<dbReference type="InterPro" id="IPR038345">
    <property type="entry name" value="Flavi_E_Stem/Anchor_dom_sf"/>
</dbReference>
<dbReference type="InterPro" id="IPR011998">
    <property type="entry name" value="Flavi_Glycoprot_E_cen/dimer"/>
</dbReference>
<dbReference type="InterPro" id="IPR001157">
    <property type="entry name" value="Flavi_NS1"/>
</dbReference>
<dbReference type="InterPro" id="IPR000752">
    <property type="entry name" value="Flavi_NS2A"/>
</dbReference>
<dbReference type="InterPro" id="IPR000487">
    <property type="entry name" value="Flavi_NS2B"/>
</dbReference>
<dbReference type="InterPro" id="IPR001850">
    <property type="entry name" value="Flavi_NS3_S7"/>
</dbReference>
<dbReference type="InterPro" id="IPR000404">
    <property type="entry name" value="Flavi_NS4A"/>
</dbReference>
<dbReference type="InterPro" id="IPR001528">
    <property type="entry name" value="Flavi_NS4B"/>
</dbReference>
<dbReference type="InterPro" id="IPR046811">
    <property type="entry name" value="Flavi_NS5_thumb"/>
</dbReference>
<dbReference type="InterPro" id="IPR002535">
    <property type="entry name" value="Flavi_propep"/>
</dbReference>
<dbReference type="InterPro" id="IPR038688">
    <property type="entry name" value="Flavi_propep_sf"/>
</dbReference>
<dbReference type="InterPro" id="IPR047530">
    <property type="entry name" value="Flavi_RdRp"/>
</dbReference>
<dbReference type="InterPro" id="IPR000208">
    <property type="entry name" value="Flavi_RdRp_fingers/palm"/>
</dbReference>
<dbReference type="InterPro" id="IPR000336">
    <property type="entry name" value="Flavivir/Alphavir_Ig-like_sf"/>
</dbReference>
<dbReference type="InterPro" id="IPR014412">
    <property type="entry name" value="Gen_Poly_FLV"/>
</dbReference>
<dbReference type="InterPro" id="IPR036253">
    <property type="entry name" value="Glycoprot_cen/dimer_sf"/>
</dbReference>
<dbReference type="InterPro" id="IPR038055">
    <property type="entry name" value="Glycoprot_E_dimer_dom"/>
</dbReference>
<dbReference type="InterPro" id="IPR013756">
    <property type="entry name" value="GlyE_cen_dom_subdom2"/>
</dbReference>
<dbReference type="InterPro" id="IPR014001">
    <property type="entry name" value="Helicase_ATP-bd"/>
</dbReference>
<dbReference type="InterPro" id="IPR001650">
    <property type="entry name" value="Helicase_C-like"/>
</dbReference>
<dbReference type="InterPro" id="IPR014756">
    <property type="entry name" value="Ig_E-set"/>
</dbReference>
<dbReference type="InterPro" id="IPR026490">
    <property type="entry name" value="mRNA_cap_0/1_MeTrfase"/>
</dbReference>
<dbReference type="InterPro" id="IPR049486">
    <property type="entry name" value="NS3-hel_C_flaviviridae"/>
</dbReference>
<dbReference type="InterPro" id="IPR027417">
    <property type="entry name" value="P-loop_NTPase"/>
</dbReference>
<dbReference type="InterPro" id="IPR009003">
    <property type="entry name" value="Peptidase_S1_PA"/>
</dbReference>
<dbReference type="InterPro" id="IPR007094">
    <property type="entry name" value="RNA-dir_pol_PSvirus"/>
</dbReference>
<dbReference type="InterPro" id="IPR002877">
    <property type="entry name" value="RNA_MeTrfase_FtsJ_dom"/>
</dbReference>
<dbReference type="InterPro" id="IPR029063">
    <property type="entry name" value="SAM-dependent_MTases_sf"/>
</dbReference>
<dbReference type="NCBIfam" id="TIGR04240">
    <property type="entry name" value="flavi_E_stem"/>
    <property type="match status" value="1"/>
</dbReference>
<dbReference type="Pfam" id="PF20907">
    <property type="entry name" value="Flav_NS3-hel_C"/>
    <property type="match status" value="1"/>
</dbReference>
<dbReference type="Pfam" id="PF01003">
    <property type="entry name" value="Flavi_capsid"/>
    <property type="match status" value="1"/>
</dbReference>
<dbReference type="Pfam" id="PF07652">
    <property type="entry name" value="Flavi_DEAD"/>
    <property type="match status" value="1"/>
</dbReference>
<dbReference type="Pfam" id="PF21659">
    <property type="entry name" value="Flavi_E_stem"/>
    <property type="match status" value="1"/>
</dbReference>
<dbReference type="Pfam" id="PF02832">
    <property type="entry name" value="Flavi_glycop_C"/>
    <property type="match status" value="1"/>
</dbReference>
<dbReference type="Pfam" id="PF00869">
    <property type="entry name" value="Flavi_glycoprot"/>
    <property type="match status" value="1"/>
</dbReference>
<dbReference type="Pfam" id="PF01004">
    <property type="entry name" value="Flavi_M"/>
    <property type="match status" value="1"/>
</dbReference>
<dbReference type="Pfam" id="PF00948">
    <property type="entry name" value="Flavi_NS1"/>
    <property type="match status" value="1"/>
</dbReference>
<dbReference type="Pfam" id="PF01005">
    <property type="entry name" value="Flavi_NS2A"/>
    <property type="match status" value="1"/>
</dbReference>
<dbReference type="Pfam" id="PF01002">
    <property type="entry name" value="Flavi_NS2B"/>
    <property type="match status" value="1"/>
</dbReference>
<dbReference type="Pfam" id="PF01350">
    <property type="entry name" value="Flavi_NS4A"/>
    <property type="match status" value="1"/>
</dbReference>
<dbReference type="Pfam" id="PF01349">
    <property type="entry name" value="Flavi_NS4B"/>
    <property type="match status" value="1"/>
</dbReference>
<dbReference type="Pfam" id="PF00972">
    <property type="entry name" value="Flavi_NS5"/>
    <property type="match status" value="1"/>
</dbReference>
<dbReference type="Pfam" id="PF20483">
    <property type="entry name" value="Flavi_NS5_thumb"/>
    <property type="match status" value="1"/>
</dbReference>
<dbReference type="Pfam" id="PF01570">
    <property type="entry name" value="Flavi_propep"/>
    <property type="match status" value="1"/>
</dbReference>
<dbReference type="Pfam" id="PF01728">
    <property type="entry name" value="FtsJ"/>
    <property type="match status" value="1"/>
</dbReference>
<dbReference type="Pfam" id="PF00949">
    <property type="entry name" value="Peptidase_S7"/>
    <property type="match status" value="1"/>
</dbReference>
<dbReference type="PIRSF" id="PIRSF003817">
    <property type="entry name" value="Gen_Poly_FLV"/>
    <property type="match status" value="1"/>
</dbReference>
<dbReference type="SMART" id="SM00487">
    <property type="entry name" value="DEXDc"/>
    <property type="match status" value="1"/>
</dbReference>
<dbReference type="SMART" id="SM00490">
    <property type="entry name" value="HELICc"/>
    <property type="match status" value="1"/>
</dbReference>
<dbReference type="SUPFAM" id="SSF56672">
    <property type="entry name" value="DNA/RNA polymerases"/>
    <property type="match status" value="1"/>
</dbReference>
<dbReference type="SUPFAM" id="SSF81296">
    <property type="entry name" value="E set domains"/>
    <property type="match status" value="1"/>
</dbReference>
<dbReference type="SUPFAM" id="SSF101257">
    <property type="entry name" value="Flavivirus capsid protein C"/>
    <property type="match status" value="1"/>
</dbReference>
<dbReference type="SUPFAM" id="SSF52540">
    <property type="entry name" value="P-loop containing nucleoside triphosphate hydrolases"/>
    <property type="match status" value="2"/>
</dbReference>
<dbReference type="SUPFAM" id="SSF53335">
    <property type="entry name" value="S-adenosyl-L-methionine-dependent methyltransferases"/>
    <property type="match status" value="1"/>
</dbReference>
<dbReference type="SUPFAM" id="SSF50494">
    <property type="entry name" value="Trypsin-like serine proteases"/>
    <property type="match status" value="1"/>
</dbReference>
<dbReference type="SUPFAM" id="SSF56983">
    <property type="entry name" value="Viral glycoprotein, central and dimerisation domains"/>
    <property type="match status" value="1"/>
</dbReference>
<dbReference type="PROSITE" id="PS51527">
    <property type="entry name" value="FLAVIVIRUS_NS2B"/>
    <property type="match status" value="1"/>
</dbReference>
<dbReference type="PROSITE" id="PS51528">
    <property type="entry name" value="FLAVIVIRUS_NS3PRO"/>
    <property type="match status" value="1"/>
</dbReference>
<dbReference type="PROSITE" id="PS51192">
    <property type="entry name" value="HELICASE_ATP_BIND_1"/>
    <property type="match status" value="1"/>
</dbReference>
<dbReference type="PROSITE" id="PS51194">
    <property type="entry name" value="HELICASE_CTER"/>
    <property type="match status" value="1"/>
</dbReference>
<dbReference type="PROSITE" id="PS50507">
    <property type="entry name" value="RDRP_SSRNA_POS"/>
    <property type="match status" value="1"/>
</dbReference>
<dbReference type="PROSITE" id="PS51591">
    <property type="entry name" value="RNA_CAP01_NS5_MT"/>
    <property type="match status" value="1"/>
</dbReference>
<name>POLG_ZIKVK</name>